<gene>
    <name type="primary">5-HT1A</name>
    <name type="synonym">5HT-R2A</name>
    <name type="ORF">CG16720</name>
</gene>
<comment type="function">
    <text>This is one of the several different receptors for 5-hydroxytryptamine (serotonin), a biogenic hormone that functions as a neurotransmitter, a hormone, and a mitogen. The activity of this receptor is mediated by G proteins which inhibit adenylate cyclase.</text>
</comment>
<comment type="subcellular location">
    <subcellularLocation>
        <location>Cell membrane</location>
        <topology>Multi-pass membrane protein</topology>
    </subcellularLocation>
</comment>
<comment type="similarity">
    <text evidence="3">Belongs to the G-protein coupled receptor 1 family.</text>
</comment>
<comment type="sequence caution" evidence="9">
    <conflict type="erroneous termination">
        <sequence resource="EMBL-CDS" id="AAY84887"/>
    </conflict>
    <text>Truncated C-terminus.</text>
</comment>
<protein>
    <recommendedName>
        <fullName>5-hydroxytryptamine receptor 2A</fullName>
        <shortName>5-HT receptor 2A</shortName>
    </recommendedName>
    <alternativeName>
        <fullName>Serotonin receptor 2A</fullName>
    </alternativeName>
</protein>
<dbReference type="EMBL" id="Z11489">
    <property type="protein sequence ID" value="CAA77570.1"/>
    <property type="molecule type" value="mRNA"/>
</dbReference>
<dbReference type="EMBL" id="AE013599">
    <property type="protein sequence ID" value="AAF57603.1"/>
    <property type="molecule type" value="Genomic_DNA"/>
</dbReference>
<dbReference type="EMBL" id="AE013599">
    <property type="protein sequence ID" value="AAM68432.1"/>
    <property type="molecule type" value="Genomic_DNA"/>
</dbReference>
<dbReference type="EMBL" id="BT023487">
    <property type="protein sequence ID" value="AAY84887.1"/>
    <property type="status" value="ALT_SEQ"/>
    <property type="molecule type" value="mRNA"/>
</dbReference>
<dbReference type="EMBL" id="AY564785">
    <property type="protein sequence ID" value="AAS73796.1"/>
    <property type="molecule type" value="Genomic_DNA"/>
</dbReference>
<dbReference type="EMBL" id="AY564786">
    <property type="protein sequence ID" value="AAS73797.1"/>
    <property type="molecule type" value="Genomic_DNA"/>
</dbReference>
<dbReference type="EMBL" id="AY564787">
    <property type="protein sequence ID" value="AAS73798.1"/>
    <property type="molecule type" value="Genomic_DNA"/>
</dbReference>
<dbReference type="EMBL" id="AY564788">
    <property type="protein sequence ID" value="AAS73799.1"/>
    <property type="molecule type" value="Genomic_DNA"/>
</dbReference>
<dbReference type="EMBL" id="AY564789">
    <property type="protein sequence ID" value="AAS73800.1"/>
    <property type="molecule type" value="Genomic_DNA"/>
</dbReference>
<dbReference type="EMBL" id="AY564790">
    <property type="protein sequence ID" value="AAS73801.1"/>
    <property type="molecule type" value="Genomic_DNA"/>
</dbReference>
<dbReference type="EMBL" id="AY564791">
    <property type="protein sequence ID" value="AAS73802.1"/>
    <property type="molecule type" value="Genomic_DNA"/>
</dbReference>
<dbReference type="EMBL" id="AY564792">
    <property type="protein sequence ID" value="AAS73803.1"/>
    <property type="molecule type" value="Genomic_DNA"/>
</dbReference>
<dbReference type="EMBL" id="AY564793">
    <property type="protein sequence ID" value="AAS73804.1"/>
    <property type="molecule type" value="Genomic_DNA"/>
</dbReference>
<dbReference type="EMBL" id="AY564794">
    <property type="protein sequence ID" value="AAS73805.1"/>
    <property type="molecule type" value="Genomic_DNA"/>
</dbReference>
<dbReference type="EMBL" id="AY564795">
    <property type="protein sequence ID" value="AAS73806.1"/>
    <property type="molecule type" value="Genomic_DNA"/>
</dbReference>
<dbReference type="EMBL" id="AY564796">
    <property type="protein sequence ID" value="AAS73807.1"/>
    <property type="molecule type" value="Genomic_DNA"/>
</dbReference>
<dbReference type="EMBL" id="AY564797">
    <property type="protein sequence ID" value="AAS73808.1"/>
    <property type="molecule type" value="Genomic_DNA"/>
</dbReference>
<dbReference type="EMBL" id="AY564798">
    <property type="protein sequence ID" value="AAS73809.1"/>
    <property type="molecule type" value="Genomic_DNA"/>
</dbReference>
<dbReference type="EMBL" id="AY564799">
    <property type="protein sequence ID" value="AAS73810.1"/>
    <property type="molecule type" value="Genomic_DNA"/>
</dbReference>
<dbReference type="EMBL" id="AY564800">
    <property type="protein sequence ID" value="AAS73811.1"/>
    <property type="molecule type" value="Genomic_DNA"/>
</dbReference>
<dbReference type="EMBL" id="AY564801">
    <property type="protein sequence ID" value="AAS73812.1"/>
    <property type="molecule type" value="Genomic_DNA"/>
</dbReference>
<dbReference type="EMBL" id="AY564802">
    <property type="protein sequence ID" value="AAS73813.1"/>
    <property type="molecule type" value="Genomic_DNA"/>
</dbReference>
<dbReference type="EMBL" id="AY564803">
    <property type="protein sequence ID" value="AAS73814.1"/>
    <property type="molecule type" value="Genomic_DNA"/>
</dbReference>
<dbReference type="EMBL" id="AY564804">
    <property type="protein sequence ID" value="AAS73815.1"/>
    <property type="molecule type" value="Genomic_DNA"/>
</dbReference>
<dbReference type="EMBL" id="AY564805">
    <property type="protein sequence ID" value="AAS73816.1"/>
    <property type="molecule type" value="Genomic_DNA"/>
</dbReference>
<dbReference type="EMBL" id="AY564806">
    <property type="protein sequence ID" value="AAS73817.1"/>
    <property type="molecule type" value="Genomic_DNA"/>
</dbReference>
<dbReference type="EMBL" id="AY564807">
    <property type="protein sequence ID" value="AAS73818.1"/>
    <property type="molecule type" value="Genomic_DNA"/>
</dbReference>
<dbReference type="EMBL" id="AY564808">
    <property type="protein sequence ID" value="AAS73819.1"/>
    <property type="molecule type" value="Genomic_DNA"/>
</dbReference>
<dbReference type="EMBL" id="AY564809">
    <property type="protein sequence ID" value="AAS73820.1"/>
    <property type="molecule type" value="Genomic_DNA"/>
</dbReference>
<dbReference type="EMBL" id="AY564810">
    <property type="protein sequence ID" value="AAS73821.1"/>
    <property type="molecule type" value="Genomic_DNA"/>
</dbReference>
<dbReference type="EMBL" id="AY564811">
    <property type="protein sequence ID" value="AAS73822.1"/>
    <property type="molecule type" value="Genomic_DNA"/>
</dbReference>
<dbReference type="EMBL" id="AY564812">
    <property type="protein sequence ID" value="AAS73823.1"/>
    <property type="molecule type" value="Genomic_DNA"/>
</dbReference>
<dbReference type="EMBL" id="AY564813">
    <property type="protein sequence ID" value="AAS73824.1"/>
    <property type="molecule type" value="Genomic_DNA"/>
</dbReference>
<dbReference type="EMBL" id="AY564814">
    <property type="protein sequence ID" value="AAS73825.1"/>
    <property type="molecule type" value="Genomic_DNA"/>
</dbReference>
<dbReference type="EMBL" id="AY564815">
    <property type="protein sequence ID" value="AAS73826.1"/>
    <property type="molecule type" value="Genomic_DNA"/>
</dbReference>
<dbReference type="EMBL" id="AY564816">
    <property type="protein sequence ID" value="AAS73827.1"/>
    <property type="molecule type" value="Genomic_DNA"/>
</dbReference>
<dbReference type="EMBL" id="AY564817">
    <property type="protein sequence ID" value="AAS73828.1"/>
    <property type="molecule type" value="Genomic_DNA"/>
</dbReference>
<dbReference type="EMBL" id="AY564818">
    <property type="protein sequence ID" value="AAS73829.1"/>
    <property type="molecule type" value="Genomic_DNA"/>
</dbReference>
<dbReference type="EMBL" id="AY564819">
    <property type="protein sequence ID" value="AAS73830.1"/>
    <property type="molecule type" value="Genomic_DNA"/>
</dbReference>
<dbReference type="EMBL" id="AY564820">
    <property type="protein sequence ID" value="AAS73831.1"/>
    <property type="molecule type" value="Genomic_DNA"/>
</dbReference>
<dbReference type="EMBL" id="AY564821">
    <property type="protein sequence ID" value="AAS73832.1"/>
    <property type="molecule type" value="Genomic_DNA"/>
</dbReference>
<dbReference type="EMBL" id="AY564822">
    <property type="protein sequence ID" value="AAS73833.1"/>
    <property type="molecule type" value="Genomic_DNA"/>
</dbReference>
<dbReference type="EMBL" id="AY564823">
    <property type="protein sequence ID" value="AAS73834.1"/>
    <property type="molecule type" value="Genomic_DNA"/>
</dbReference>
<dbReference type="EMBL" id="AY564824">
    <property type="protein sequence ID" value="AAS73835.1"/>
    <property type="molecule type" value="Genomic_DNA"/>
</dbReference>
<dbReference type="EMBL" id="AY564825">
    <property type="protein sequence ID" value="AAS73836.1"/>
    <property type="molecule type" value="Genomic_DNA"/>
</dbReference>
<dbReference type="EMBL" id="AY564826">
    <property type="protein sequence ID" value="AAS73837.1"/>
    <property type="molecule type" value="Genomic_DNA"/>
</dbReference>
<dbReference type="EMBL" id="AY564827">
    <property type="protein sequence ID" value="AAS73838.1"/>
    <property type="molecule type" value="Genomic_DNA"/>
</dbReference>
<dbReference type="EMBL" id="AY564828">
    <property type="protein sequence ID" value="AAS73839.1"/>
    <property type="molecule type" value="Genomic_DNA"/>
</dbReference>
<dbReference type="EMBL" id="AY564829">
    <property type="protein sequence ID" value="AAS73840.1"/>
    <property type="molecule type" value="Genomic_DNA"/>
</dbReference>
<dbReference type="EMBL" id="AY564830">
    <property type="protein sequence ID" value="AAS73841.1"/>
    <property type="molecule type" value="Genomic_DNA"/>
</dbReference>
<dbReference type="EMBL" id="AY564831">
    <property type="protein sequence ID" value="AAS73842.1"/>
    <property type="molecule type" value="Genomic_DNA"/>
</dbReference>
<dbReference type="EMBL" id="AY564832">
    <property type="protein sequence ID" value="AAS73843.1"/>
    <property type="molecule type" value="Genomic_DNA"/>
</dbReference>
<dbReference type="EMBL" id="AY564833">
    <property type="protein sequence ID" value="AAS73844.1"/>
    <property type="molecule type" value="Genomic_DNA"/>
</dbReference>
<dbReference type="EMBL" id="AY564834">
    <property type="protein sequence ID" value="AAS73845.1"/>
    <property type="molecule type" value="Genomic_DNA"/>
</dbReference>
<dbReference type="EMBL" id="AY564835">
    <property type="protein sequence ID" value="AAS73846.1"/>
    <property type="molecule type" value="Genomic_DNA"/>
</dbReference>
<dbReference type="EMBL" id="AY564836">
    <property type="protein sequence ID" value="AAS73847.1"/>
    <property type="molecule type" value="Genomic_DNA"/>
</dbReference>
<dbReference type="EMBL" id="AY564837">
    <property type="protein sequence ID" value="AAS73848.1"/>
    <property type="molecule type" value="Genomic_DNA"/>
</dbReference>
<dbReference type="EMBL" id="AY564838">
    <property type="protein sequence ID" value="AAS73849.1"/>
    <property type="molecule type" value="Genomic_DNA"/>
</dbReference>
<dbReference type="EMBL" id="AY564839">
    <property type="protein sequence ID" value="AAS73850.1"/>
    <property type="molecule type" value="Genomic_DNA"/>
</dbReference>
<dbReference type="EMBL" id="AY564840">
    <property type="protein sequence ID" value="AAS73851.1"/>
    <property type="molecule type" value="Genomic_DNA"/>
</dbReference>
<dbReference type="EMBL" id="AY564841">
    <property type="protein sequence ID" value="AAS73852.1"/>
    <property type="molecule type" value="Genomic_DNA"/>
</dbReference>
<dbReference type="EMBL" id="AY564842">
    <property type="protein sequence ID" value="AAS73853.1"/>
    <property type="molecule type" value="Genomic_DNA"/>
</dbReference>
<dbReference type="EMBL" id="AY564843">
    <property type="protein sequence ID" value="AAS73854.1"/>
    <property type="molecule type" value="Genomic_DNA"/>
</dbReference>
<dbReference type="EMBL" id="AY564844">
    <property type="protein sequence ID" value="AAS73855.1"/>
    <property type="molecule type" value="Genomic_DNA"/>
</dbReference>
<dbReference type="EMBL" id="AY564845">
    <property type="protein sequence ID" value="AAS73856.1"/>
    <property type="molecule type" value="Genomic_DNA"/>
</dbReference>
<dbReference type="EMBL" id="AY564846">
    <property type="protein sequence ID" value="AAS73857.1"/>
    <property type="molecule type" value="Genomic_DNA"/>
</dbReference>
<dbReference type="EMBL" id="AY564847">
    <property type="protein sequence ID" value="AAS73858.1"/>
    <property type="molecule type" value="Genomic_DNA"/>
</dbReference>
<dbReference type="EMBL" id="AY564848">
    <property type="protein sequence ID" value="AAS73859.1"/>
    <property type="molecule type" value="Genomic_DNA"/>
</dbReference>
<dbReference type="EMBL" id="AY564849">
    <property type="protein sequence ID" value="AAS73860.1"/>
    <property type="molecule type" value="Genomic_DNA"/>
</dbReference>
<dbReference type="EMBL" id="AY564850">
    <property type="protein sequence ID" value="AAS73861.1"/>
    <property type="molecule type" value="Genomic_DNA"/>
</dbReference>
<dbReference type="EMBL" id="AY564851">
    <property type="protein sequence ID" value="AAS73862.1"/>
    <property type="molecule type" value="Genomic_DNA"/>
</dbReference>
<dbReference type="EMBL" id="AY564852">
    <property type="protein sequence ID" value="AAS73863.1"/>
    <property type="molecule type" value="Genomic_DNA"/>
</dbReference>
<dbReference type="EMBL" id="AY564853">
    <property type="protein sequence ID" value="AAS73864.1"/>
    <property type="molecule type" value="Genomic_DNA"/>
</dbReference>
<dbReference type="EMBL" id="AY564854">
    <property type="protein sequence ID" value="AAS73865.1"/>
    <property type="molecule type" value="Genomic_DNA"/>
</dbReference>
<dbReference type="EMBL" id="AY564855">
    <property type="protein sequence ID" value="AAS73866.1"/>
    <property type="molecule type" value="Genomic_DNA"/>
</dbReference>
<dbReference type="EMBL" id="AY564856">
    <property type="protein sequence ID" value="AAS73867.1"/>
    <property type="molecule type" value="Genomic_DNA"/>
</dbReference>
<dbReference type="EMBL" id="AY564857">
    <property type="protein sequence ID" value="AAS73868.1"/>
    <property type="molecule type" value="Genomic_DNA"/>
</dbReference>
<dbReference type="EMBL" id="AY564858">
    <property type="protein sequence ID" value="AAS73869.1"/>
    <property type="molecule type" value="Genomic_DNA"/>
</dbReference>
<dbReference type="EMBL" id="AY564859">
    <property type="protein sequence ID" value="AAS73870.1"/>
    <property type="molecule type" value="Genomic_DNA"/>
</dbReference>
<dbReference type="EMBL" id="AY564860">
    <property type="protein sequence ID" value="AAS73871.1"/>
    <property type="molecule type" value="Genomic_DNA"/>
</dbReference>
<dbReference type="EMBL" id="AY564861">
    <property type="protein sequence ID" value="AAS73872.1"/>
    <property type="molecule type" value="Genomic_DNA"/>
</dbReference>
<dbReference type="EMBL" id="AY564862">
    <property type="protein sequence ID" value="AAS73873.1"/>
    <property type="molecule type" value="Genomic_DNA"/>
</dbReference>
<dbReference type="EMBL" id="AY564863">
    <property type="protein sequence ID" value="AAS73874.1"/>
    <property type="molecule type" value="Genomic_DNA"/>
</dbReference>
<dbReference type="EMBL" id="AY564864">
    <property type="protein sequence ID" value="AAS73875.1"/>
    <property type="molecule type" value="Genomic_DNA"/>
</dbReference>
<dbReference type="EMBL" id="AY564865">
    <property type="protein sequence ID" value="AAS73876.1"/>
    <property type="molecule type" value="Genomic_DNA"/>
</dbReference>
<dbReference type="EMBL" id="AY564866">
    <property type="protein sequence ID" value="AAS73877.1"/>
    <property type="molecule type" value="Genomic_DNA"/>
</dbReference>
<dbReference type="EMBL" id="AY564867">
    <property type="protein sequence ID" value="AAS73878.1"/>
    <property type="molecule type" value="Genomic_DNA"/>
</dbReference>
<dbReference type="EMBL" id="AY564868">
    <property type="protein sequence ID" value="AAS73879.1"/>
    <property type="molecule type" value="Genomic_DNA"/>
</dbReference>
<dbReference type="EMBL" id="AY564869">
    <property type="protein sequence ID" value="AAS73880.1"/>
    <property type="molecule type" value="Genomic_DNA"/>
</dbReference>
<dbReference type="EMBL" id="AY564870">
    <property type="protein sequence ID" value="AAS73881.1"/>
    <property type="molecule type" value="Genomic_DNA"/>
</dbReference>
<dbReference type="EMBL" id="AY564871">
    <property type="protein sequence ID" value="AAS73882.1"/>
    <property type="molecule type" value="Genomic_DNA"/>
</dbReference>
<dbReference type="EMBL" id="AY564872">
    <property type="protein sequence ID" value="AAS73883.1"/>
    <property type="molecule type" value="Genomic_DNA"/>
</dbReference>
<dbReference type="EMBL" id="AY564873">
    <property type="protein sequence ID" value="AAS73884.1"/>
    <property type="molecule type" value="Genomic_DNA"/>
</dbReference>
<dbReference type="EMBL" id="AY564874">
    <property type="protein sequence ID" value="AAS73885.1"/>
    <property type="molecule type" value="Genomic_DNA"/>
</dbReference>
<dbReference type="EMBL" id="AY564875">
    <property type="protein sequence ID" value="AAS73886.1"/>
    <property type="molecule type" value="Genomic_DNA"/>
</dbReference>
<dbReference type="EMBL" id="AY564876">
    <property type="protein sequence ID" value="AAS73887.1"/>
    <property type="molecule type" value="Genomic_DNA"/>
</dbReference>
<dbReference type="EMBL" id="AY564877">
    <property type="protein sequence ID" value="AAS73888.1"/>
    <property type="molecule type" value="Genomic_DNA"/>
</dbReference>
<dbReference type="EMBL" id="AY564878">
    <property type="protein sequence ID" value="AAS73889.1"/>
    <property type="molecule type" value="Genomic_DNA"/>
</dbReference>
<dbReference type="EMBL" id="AY564879">
    <property type="protein sequence ID" value="AAS73890.1"/>
    <property type="molecule type" value="Genomic_DNA"/>
</dbReference>
<dbReference type="EMBL" id="AY564880">
    <property type="protein sequence ID" value="AAS73891.1"/>
    <property type="molecule type" value="Genomic_DNA"/>
</dbReference>
<dbReference type="EMBL" id="AY564881">
    <property type="protein sequence ID" value="AAS73892.1"/>
    <property type="molecule type" value="Genomic_DNA"/>
</dbReference>
<dbReference type="EMBL" id="AY564882">
    <property type="protein sequence ID" value="AAS73893.1"/>
    <property type="molecule type" value="Genomic_DNA"/>
</dbReference>
<dbReference type="EMBL" id="AY564883">
    <property type="protein sequence ID" value="AAS73894.1"/>
    <property type="molecule type" value="Genomic_DNA"/>
</dbReference>
<dbReference type="EMBL" id="AY564884">
    <property type="protein sequence ID" value="AAS73895.1"/>
    <property type="molecule type" value="Genomic_DNA"/>
</dbReference>
<dbReference type="EMBL" id="AY564885">
    <property type="protein sequence ID" value="AAS73896.1"/>
    <property type="molecule type" value="Genomic_DNA"/>
</dbReference>
<dbReference type="EMBL" id="AY564886">
    <property type="protein sequence ID" value="AAS73897.1"/>
    <property type="molecule type" value="Genomic_DNA"/>
</dbReference>
<dbReference type="EMBL" id="AY564887">
    <property type="protein sequence ID" value="AAS73898.1"/>
    <property type="molecule type" value="Genomic_DNA"/>
</dbReference>
<dbReference type="EMBL" id="AY564888">
    <property type="protein sequence ID" value="AAS73899.1"/>
    <property type="molecule type" value="Genomic_DNA"/>
</dbReference>
<dbReference type="EMBL" id="AY564889">
    <property type="protein sequence ID" value="AAS73900.1"/>
    <property type="molecule type" value="Genomic_DNA"/>
</dbReference>
<dbReference type="EMBL" id="AY564890">
    <property type="protein sequence ID" value="AAS73901.1"/>
    <property type="molecule type" value="Genomic_DNA"/>
</dbReference>
<dbReference type="EMBL" id="AY564891">
    <property type="protein sequence ID" value="AAS73902.1"/>
    <property type="molecule type" value="Genomic_DNA"/>
</dbReference>
<dbReference type="EMBL" id="AY564892">
    <property type="protein sequence ID" value="AAS73903.1"/>
    <property type="molecule type" value="Genomic_DNA"/>
</dbReference>
<dbReference type="EMBL" id="AY564893">
    <property type="protein sequence ID" value="AAS73904.1"/>
    <property type="molecule type" value="Genomic_DNA"/>
</dbReference>
<dbReference type="EMBL" id="AY564894">
    <property type="protein sequence ID" value="AAS73905.1"/>
    <property type="molecule type" value="Genomic_DNA"/>
</dbReference>
<dbReference type="EMBL" id="AY564895">
    <property type="protein sequence ID" value="AAS73906.1"/>
    <property type="molecule type" value="Genomic_DNA"/>
</dbReference>
<dbReference type="EMBL" id="AY564896">
    <property type="protein sequence ID" value="AAS73907.1"/>
    <property type="molecule type" value="Genomic_DNA"/>
</dbReference>
<dbReference type="EMBL" id="AY564897">
    <property type="protein sequence ID" value="AAS73908.1"/>
    <property type="molecule type" value="Genomic_DNA"/>
</dbReference>
<dbReference type="EMBL" id="AY564898">
    <property type="protein sequence ID" value="AAS73909.1"/>
    <property type="molecule type" value="Genomic_DNA"/>
</dbReference>
<dbReference type="EMBL" id="AY564899">
    <property type="protein sequence ID" value="AAS73910.1"/>
    <property type="molecule type" value="Genomic_DNA"/>
</dbReference>
<dbReference type="EMBL" id="AY564900">
    <property type="protein sequence ID" value="AAS73911.1"/>
    <property type="molecule type" value="Genomic_DNA"/>
</dbReference>
<dbReference type="EMBL" id="AY564901">
    <property type="protein sequence ID" value="AAS73912.1"/>
    <property type="molecule type" value="Genomic_DNA"/>
</dbReference>
<dbReference type="EMBL" id="AY564902">
    <property type="protein sequence ID" value="AAS73913.1"/>
    <property type="molecule type" value="Genomic_DNA"/>
</dbReference>
<dbReference type="EMBL" id="AY564903">
    <property type="protein sequence ID" value="AAS73914.1"/>
    <property type="molecule type" value="Genomic_DNA"/>
</dbReference>
<dbReference type="EMBL" id="AY564904">
    <property type="protein sequence ID" value="AAS73915.1"/>
    <property type="molecule type" value="Genomic_DNA"/>
</dbReference>
<dbReference type="EMBL" id="AY564905">
    <property type="protein sequence ID" value="AAS73916.1"/>
    <property type="molecule type" value="Genomic_DNA"/>
</dbReference>
<dbReference type="EMBL" id="AY564906">
    <property type="protein sequence ID" value="AAS73917.1"/>
    <property type="molecule type" value="Genomic_DNA"/>
</dbReference>
<dbReference type="EMBL" id="AY564907">
    <property type="protein sequence ID" value="AAS73918.1"/>
    <property type="molecule type" value="Genomic_DNA"/>
</dbReference>
<dbReference type="EMBL" id="AY564908">
    <property type="protein sequence ID" value="AAS73919.1"/>
    <property type="molecule type" value="Genomic_DNA"/>
</dbReference>
<dbReference type="EMBL" id="AY564909">
    <property type="protein sequence ID" value="AAS73920.1"/>
    <property type="molecule type" value="Genomic_DNA"/>
</dbReference>
<dbReference type="EMBL" id="AY564910">
    <property type="protein sequence ID" value="AAS73921.1"/>
    <property type="molecule type" value="Genomic_DNA"/>
</dbReference>
<dbReference type="EMBL" id="AY564911">
    <property type="protein sequence ID" value="AAS73922.1"/>
    <property type="molecule type" value="Genomic_DNA"/>
</dbReference>
<dbReference type="EMBL" id="AY564912">
    <property type="protein sequence ID" value="AAS73923.1"/>
    <property type="molecule type" value="Genomic_DNA"/>
</dbReference>
<dbReference type="EMBL" id="AY564913">
    <property type="protein sequence ID" value="AAS73924.1"/>
    <property type="molecule type" value="Genomic_DNA"/>
</dbReference>
<dbReference type="EMBL" id="AY564914">
    <property type="protein sequence ID" value="AAS73925.1"/>
    <property type="molecule type" value="Genomic_DNA"/>
</dbReference>
<dbReference type="EMBL" id="AY564915">
    <property type="protein sequence ID" value="AAS73926.1"/>
    <property type="molecule type" value="Genomic_DNA"/>
</dbReference>
<dbReference type="EMBL" id="AY564916">
    <property type="protein sequence ID" value="AAS73927.1"/>
    <property type="molecule type" value="Genomic_DNA"/>
</dbReference>
<dbReference type="EMBL" id="AY564917">
    <property type="protein sequence ID" value="AAS73928.1"/>
    <property type="molecule type" value="Genomic_DNA"/>
</dbReference>
<dbReference type="EMBL" id="AY564918">
    <property type="protein sequence ID" value="AAS73929.1"/>
    <property type="molecule type" value="Genomic_DNA"/>
</dbReference>
<dbReference type="EMBL" id="AY564919">
    <property type="protein sequence ID" value="AAS73930.1"/>
    <property type="molecule type" value="Genomic_DNA"/>
</dbReference>
<dbReference type="EMBL" id="AY564920">
    <property type="protein sequence ID" value="AAS73931.1"/>
    <property type="molecule type" value="Genomic_DNA"/>
</dbReference>
<dbReference type="EMBL" id="AY564921">
    <property type="protein sequence ID" value="AAS73932.1"/>
    <property type="molecule type" value="Genomic_DNA"/>
</dbReference>
<dbReference type="EMBL" id="AY564922">
    <property type="protein sequence ID" value="AAS73933.1"/>
    <property type="molecule type" value="Genomic_DNA"/>
</dbReference>
<dbReference type="EMBL" id="AY564925">
    <property type="protein sequence ID" value="AAS73936.1"/>
    <property type="molecule type" value="Genomic_DNA"/>
</dbReference>
<dbReference type="EMBL" id="AY564926">
    <property type="protein sequence ID" value="AAS73937.1"/>
    <property type="molecule type" value="Genomic_DNA"/>
</dbReference>
<dbReference type="EMBL" id="AY564927">
    <property type="protein sequence ID" value="AAS73938.1"/>
    <property type="molecule type" value="Genomic_DNA"/>
</dbReference>
<dbReference type="EMBL" id="AY564928">
    <property type="protein sequence ID" value="AAS73939.1"/>
    <property type="molecule type" value="Genomic_DNA"/>
</dbReference>
<dbReference type="EMBL" id="AY564929">
    <property type="protein sequence ID" value="AAS73940.1"/>
    <property type="molecule type" value="Genomic_DNA"/>
</dbReference>
<dbReference type="EMBL" id="AY564930">
    <property type="protein sequence ID" value="AAS73941.1"/>
    <property type="molecule type" value="Genomic_DNA"/>
</dbReference>
<dbReference type="EMBL" id="AY564931">
    <property type="protein sequence ID" value="AAS73942.1"/>
    <property type="molecule type" value="Genomic_DNA"/>
</dbReference>
<dbReference type="EMBL" id="AY564932">
    <property type="protein sequence ID" value="AAS73943.1"/>
    <property type="molecule type" value="Genomic_DNA"/>
</dbReference>
<dbReference type="EMBL" id="AY564933">
    <property type="protein sequence ID" value="AAS73944.1"/>
    <property type="molecule type" value="Genomic_DNA"/>
</dbReference>
<dbReference type="EMBL" id="AY564934">
    <property type="protein sequence ID" value="AAS73945.1"/>
    <property type="molecule type" value="Genomic_DNA"/>
</dbReference>
<dbReference type="EMBL" id="AY564935">
    <property type="protein sequence ID" value="AAS73946.1"/>
    <property type="molecule type" value="Genomic_DNA"/>
</dbReference>
<dbReference type="EMBL" id="AY564936">
    <property type="protein sequence ID" value="AAS73947.1"/>
    <property type="molecule type" value="Genomic_DNA"/>
</dbReference>
<dbReference type="EMBL" id="AY564937">
    <property type="protein sequence ID" value="AAS73948.1"/>
    <property type="molecule type" value="Genomic_DNA"/>
</dbReference>
<dbReference type="EMBL" id="AY564938">
    <property type="protein sequence ID" value="AAS73949.1"/>
    <property type="molecule type" value="Genomic_DNA"/>
</dbReference>
<dbReference type="EMBL" id="AY564939">
    <property type="protein sequence ID" value="AAS73950.1"/>
    <property type="molecule type" value="Genomic_DNA"/>
</dbReference>
<dbReference type="EMBL" id="AY564940">
    <property type="protein sequence ID" value="AAS73951.1"/>
    <property type="molecule type" value="Genomic_DNA"/>
</dbReference>
<dbReference type="EMBL" id="AY564941">
    <property type="protein sequence ID" value="AAS73952.1"/>
    <property type="molecule type" value="Genomic_DNA"/>
</dbReference>
<dbReference type="EMBL" id="AY564942">
    <property type="protein sequence ID" value="AAS73953.1"/>
    <property type="molecule type" value="Genomic_DNA"/>
</dbReference>
<dbReference type="EMBL" id="AY564943">
    <property type="protein sequence ID" value="AAS73954.1"/>
    <property type="molecule type" value="Genomic_DNA"/>
</dbReference>
<dbReference type="EMBL" id="AY564944">
    <property type="protein sequence ID" value="AAS73955.1"/>
    <property type="molecule type" value="Genomic_DNA"/>
</dbReference>
<dbReference type="EMBL" id="AY564945">
    <property type="protein sequence ID" value="AAS73956.1"/>
    <property type="molecule type" value="Genomic_DNA"/>
</dbReference>
<dbReference type="EMBL" id="AY564946">
    <property type="protein sequence ID" value="AAS73957.1"/>
    <property type="molecule type" value="Genomic_DNA"/>
</dbReference>
<dbReference type="EMBL" id="AY564947">
    <property type="protein sequence ID" value="AAS73958.1"/>
    <property type="molecule type" value="Genomic_DNA"/>
</dbReference>
<dbReference type="EMBL" id="AY564948">
    <property type="protein sequence ID" value="AAS73959.1"/>
    <property type="molecule type" value="Genomic_DNA"/>
</dbReference>
<dbReference type="EMBL" id="AY564949">
    <property type="protein sequence ID" value="AAS73960.1"/>
    <property type="molecule type" value="Genomic_DNA"/>
</dbReference>
<dbReference type="EMBL" id="AY564950">
    <property type="protein sequence ID" value="AAS73961.1"/>
    <property type="molecule type" value="Genomic_DNA"/>
</dbReference>
<dbReference type="EMBL" id="AY564951">
    <property type="protein sequence ID" value="AAS73962.1"/>
    <property type="molecule type" value="Genomic_DNA"/>
</dbReference>
<dbReference type="EMBL" id="AY564952">
    <property type="protein sequence ID" value="AAS73963.1"/>
    <property type="molecule type" value="Genomic_DNA"/>
</dbReference>
<dbReference type="EMBL" id="AY564953">
    <property type="protein sequence ID" value="AAS73964.1"/>
    <property type="molecule type" value="Genomic_DNA"/>
</dbReference>
<dbReference type="EMBL" id="AY564954">
    <property type="protein sequence ID" value="AAS73965.1"/>
    <property type="molecule type" value="Genomic_DNA"/>
</dbReference>
<dbReference type="EMBL" id="AY564955">
    <property type="protein sequence ID" value="AAS73966.1"/>
    <property type="molecule type" value="Genomic_DNA"/>
</dbReference>
<dbReference type="EMBL" id="AY564956">
    <property type="protein sequence ID" value="AAS73967.1"/>
    <property type="molecule type" value="Genomic_DNA"/>
</dbReference>
<dbReference type="EMBL" id="AY564958">
    <property type="protein sequence ID" value="AAS73968.1"/>
    <property type="molecule type" value="Genomic_DNA"/>
</dbReference>
<dbReference type="EMBL" id="AY564959">
    <property type="protein sequence ID" value="AAS73969.1"/>
    <property type="molecule type" value="Genomic_DNA"/>
</dbReference>
<dbReference type="EMBL" id="AY564960">
    <property type="protein sequence ID" value="AAS73970.1"/>
    <property type="molecule type" value="Genomic_DNA"/>
</dbReference>
<dbReference type="EMBL" id="AY564961">
    <property type="protein sequence ID" value="AAS73971.1"/>
    <property type="molecule type" value="Genomic_DNA"/>
</dbReference>
<dbReference type="EMBL" id="AY564962">
    <property type="protein sequence ID" value="AAS73972.1"/>
    <property type="molecule type" value="Genomic_DNA"/>
</dbReference>
<dbReference type="EMBL" id="AY564963">
    <property type="protein sequence ID" value="AAS73973.1"/>
    <property type="molecule type" value="Genomic_DNA"/>
</dbReference>
<dbReference type="EMBL" id="AY564964">
    <property type="protein sequence ID" value="AAS73974.1"/>
    <property type="molecule type" value="Genomic_DNA"/>
</dbReference>
<dbReference type="EMBL" id="AY564965">
    <property type="protein sequence ID" value="AAS73975.1"/>
    <property type="molecule type" value="Genomic_DNA"/>
</dbReference>
<dbReference type="EMBL" id="AY564966">
    <property type="protein sequence ID" value="AAS73976.1"/>
    <property type="molecule type" value="Genomic_DNA"/>
</dbReference>
<dbReference type="EMBL" id="AY564967">
    <property type="protein sequence ID" value="AAS73977.1"/>
    <property type="molecule type" value="Genomic_DNA"/>
</dbReference>
<dbReference type="EMBL" id="AY564968">
    <property type="protein sequence ID" value="AAS73978.1"/>
    <property type="molecule type" value="Genomic_DNA"/>
</dbReference>
<dbReference type="EMBL" id="AY564969">
    <property type="protein sequence ID" value="AAS73979.1"/>
    <property type="molecule type" value="Genomic_DNA"/>
</dbReference>
<dbReference type="EMBL" id="AY564971">
    <property type="protein sequence ID" value="AAS73981.1"/>
    <property type="molecule type" value="Genomic_DNA"/>
</dbReference>
<dbReference type="EMBL" id="AY564972">
    <property type="protein sequence ID" value="AAS73982.1"/>
    <property type="molecule type" value="Genomic_DNA"/>
</dbReference>
<dbReference type="EMBL" id="AY564973">
    <property type="protein sequence ID" value="AAS73983.1"/>
    <property type="molecule type" value="Genomic_DNA"/>
</dbReference>
<dbReference type="EMBL" id="AY564974">
    <property type="protein sequence ID" value="AAS73984.1"/>
    <property type="molecule type" value="Genomic_DNA"/>
</dbReference>
<dbReference type="EMBL" id="AY564975">
    <property type="protein sequence ID" value="AAS73985.1"/>
    <property type="molecule type" value="Genomic_DNA"/>
</dbReference>
<dbReference type="EMBL" id="AY564976">
    <property type="protein sequence ID" value="AAS73986.1"/>
    <property type="molecule type" value="Genomic_DNA"/>
</dbReference>
<dbReference type="EMBL" id="AY564977">
    <property type="protein sequence ID" value="AAS73987.1"/>
    <property type="molecule type" value="Genomic_DNA"/>
</dbReference>
<dbReference type="EMBL" id="AY565171">
    <property type="protein sequence ID" value="AAS74181.1"/>
    <property type="molecule type" value="Genomic_DNA"/>
</dbReference>
<dbReference type="EMBL" id="AY565172">
    <property type="protein sequence ID" value="AAS74182.1"/>
    <property type="molecule type" value="Genomic_DNA"/>
</dbReference>
<dbReference type="EMBL" id="AY565173">
    <property type="protein sequence ID" value="AAS74183.1"/>
    <property type="molecule type" value="Genomic_DNA"/>
</dbReference>
<dbReference type="EMBL" id="AY565174">
    <property type="protein sequence ID" value="AAS74184.1"/>
    <property type="molecule type" value="Genomic_DNA"/>
</dbReference>
<dbReference type="EMBL" id="AY565175">
    <property type="protein sequence ID" value="AAS74185.1"/>
    <property type="molecule type" value="Genomic_DNA"/>
</dbReference>
<dbReference type="EMBL" id="AY565176">
    <property type="protein sequence ID" value="AAS74186.1"/>
    <property type="molecule type" value="Genomic_DNA"/>
</dbReference>
<dbReference type="EMBL" id="AY565177">
    <property type="protein sequence ID" value="AAS74187.1"/>
    <property type="molecule type" value="Genomic_DNA"/>
</dbReference>
<dbReference type="EMBL" id="AY565178">
    <property type="protein sequence ID" value="AAS74188.1"/>
    <property type="molecule type" value="Genomic_DNA"/>
</dbReference>
<dbReference type="EMBL" id="AY565179">
    <property type="protein sequence ID" value="AAS74189.1"/>
    <property type="molecule type" value="Genomic_DNA"/>
</dbReference>
<dbReference type="EMBL" id="AY565180">
    <property type="protein sequence ID" value="AAS74190.1"/>
    <property type="molecule type" value="Genomic_DNA"/>
</dbReference>
<dbReference type="EMBL" id="AY565181">
    <property type="protein sequence ID" value="AAS74191.1"/>
    <property type="molecule type" value="Genomic_DNA"/>
</dbReference>
<dbReference type="EMBL" id="AY565182">
    <property type="protein sequence ID" value="AAS74192.1"/>
    <property type="molecule type" value="Genomic_DNA"/>
</dbReference>
<dbReference type="EMBL" id="AY565183">
    <property type="protein sequence ID" value="AAS74193.1"/>
    <property type="molecule type" value="Genomic_DNA"/>
</dbReference>
<dbReference type="EMBL" id="AY565184">
    <property type="protein sequence ID" value="AAS74194.1"/>
    <property type="molecule type" value="Genomic_DNA"/>
</dbReference>
<dbReference type="EMBL" id="AY565185">
    <property type="protein sequence ID" value="AAS74195.1"/>
    <property type="molecule type" value="Genomic_DNA"/>
</dbReference>
<dbReference type="EMBL" id="AY565186">
    <property type="protein sequence ID" value="AAS74196.1"/>
    <property type="molecule type" value="Genomic_DNA"/>
</dbReference>
<dbReference type="EMBL" id="AY565187">
    <property type="protein sequence ID" value="AAS74197.1"/>
    <property type="molecule type" value="Genomic_DNA"/>
</dbReference>
<dbReference type="EMBL" id="AY565188">
    <property type="protein sequence ID" value="AAS74198.1"/>
    <property type="molecule type" value="Genomic_DNA"/>
</dbReference>
<dbReference type="EMBL" id="AY565189">
    <property type="protein sequence ID" value="AAS74199.1"/>
    <property type="molecule type" value="Genomic_DNA"/>
</dbReference>
<dbReference type="EMBL" id="AY565190">
    <property type="protein sequence ID" value="AAS74200.1"/>
    <property type="molecule type" value="Genomic_DNA"/>
</dbReference>
<dbReference type="EMBL" id="AY565191">
    <property type="protein sequence ID" value="AAS74201.1"/>
    <property type="molecule type" value="Genomic_DNA"/>
</dbReference>
<dbReference type="EMBL" id="AY565192">
    <property type="protein sequence ID" value="AAS74202.1"/>
    <property type="molecule type" value="Genomic_DNA"/>
</dbReference>
<dbReference type="EMBL" id="AY565193">
    <property type="protein sequence ID" value="AAS74203.1"/>
    <property type="molecule type" value="Genomic_DNA"/>
</dbReference>
<dbReference type="EMBL" id="AY565194">
    <property type="protein sequence ID" value="AAS74204.1"/>
    <property type="molecule type" value="Genomic_DNA"/>
</dbReference>
<dbReference type="EMBL" id="AY565195">
    <property type="protein sequence ID" value="AAS74205.1"/>
    <property type="molecule type" value="Genomic_DNA"/>
</dbReference>
<dbReference type="EMBL" id="AY565196">
    <property type="protein sequence ID" value="AAS74206.1"/>
    <property type="molecule type" value="Genomic_DNA"/>
</dbReference>
<dbReference type="EMBL" id="AY565197">
    <property type="protein sequence ID" value="AAS74207.1"/>
    <property type="molecule type" value="Genomic_DNA"/>
</dbReference>
<dbReference type="EMBL" id="AY565198">
    <property type="protein sequence ID" value="AAS74208.1"/>
    <property type="molecule type" value="Genomic_DNA"/>
</dbReference>
<dbReference type="EMBL" id="AY565199">
    <property type="protein sequence ID" value="AAS74209.1"/>
    <property type="molecule type" value="Genomic_DNA"/>
</dbReference>
<dbReference type="EMBL" id="AY565200">
    <property type="protein sequence ID" value="AAS74210.1"/>
    <property type="molecule type" value="Genomic_DNA"/>
</dbReference>
<dbReference type="EMBL" id="AY565201">
    <property type="protein sequence ID" value="AAS74211.1"/>
    <property type="molecule type" value="Genomic_DNA"/>
</dbReference>
<dbReference type="EMBL" id="AY565202">
    <property type="protein sequence ID" value="AAS74212.1"/>
    <property type="molecule type" value="Genomic_DNA"/>
</dbReference>
<dbReference type="EMBL" id="AY565203">
    <property type="protein sequence ID" value="AAS74213.1"/>
    <property type="molecule type" value="Genomic_DNA"/>
</dbReference>
<dbReference type="EMBL" id="AY565204">
    <property type="protein sequence ID" value="AAS74214.1"/>
    <property type="molecule type" value="Genomic_DNA"/>
</dbReference>
<dbReference type="EMBL" id="AY565205">
    <property type="protein sequence ID" value="AAS74215.1"/>
    <property type="molecule type" value="Genomic_DNA"/>
</dbReference>
<dbReference type="EMBL" id="AY565206">
    <property type="protein sequence ID" value="AAS74216.1"/>
    <property type="molecule type" value="Genomic_DNA"/>
</dbReference>
<dbReference type="EMBL" id="AY565207">
    <property type="protein sequence ID" value="AAS74217.1"/>
    <property type="molecule type" value="Genomic_DNA"/>
</dbReference>
<dbReference type="EMBL" id="AY565208">
    <property type="protein sequence ID" value="AAS74218.1"/>
    <property type="molecule type" value="Genomic_DNA"/>
</dbReference>
<dbReference type="EMBL" id="AY565209">
    <property type="protein sequence ID" value="AAS74219.1"/>
    <property type="molecule type" value="Genomic_DNA"/>
</dbReference>
<dbReference type="EMBL" id="AY565210">
    <property type="protein sequence ID" value="AAS74220.1"/>
    <property type="molecule type" value="Genomic_DNA"/>
</dbReference>
<dbReference type="EMBL" id="AY565211">
    <property type="protein sequence ID" value="AAS74221.1"/>
    <property type="molecule type" value="Genomic_DNA"/>
</dbReference>
<dbReference type="EMBL" id="AY565212">
    <property type="protein sequence ID" value="AAS74222.1"/>
    <property type="molecule type" value="Genomic_DNA"/>
</dbReference>
<dbReference type="EMBL" id="AY565213">
    <property type="protein sequence ID" value="AAS74223.1"/>
    <property type="molecule type" value="Genomic_DNA"/>
</dbReference>
<dbReference type="EMBL" id="AY565214">
    <property type="protein sequence ID" value="AAS74224.1"/>
    <property type="molecule type" value="Genomic_DNA"/>
</dbReference>
<dbReference type="EMBL" id="AY565215">
    <property type="protein sequence ID" value="AAS74225.1"/>
    <property type="molecule type" value="Genomic_DNA"/>
</dbReference>
<dbReference type="EMBL" id="AY565216">
    <property type="protein sequence ID" value="AAS74226.1"/>
    <property type="molecule type" value="Genomic_DNA"/>
</dbReference>
<dbReference type="EMBL" id="AY565217">
    <property type="protein sequence ID" value="AAS74227.1"/>
    <property type="molecule type" value="Genomic_DNA"/>
</dbReference>
<dbReference type="EMBL" id="AY565218">
    <property type="protein sequence ID" value="AAS74228.1"/>
    <property type="molecule type" value="Genomic_DNA"/>
</dbReference>
<dbReference type="EMBL" id="AY565219">
    <property type="protein sequence ID" value="AAS74229.1"/>
    <property type="molecule type" value="Genomic_DNA"/>
</dbReference>
<dbReference type="EMBL" id="AY565220">
    <property type="protein sequence ID" value="AAS74230.1"/>
    <property type="molecule type" value="Genomic_DNA"/>
</dbReference>
<dbReference type="EMBL" id="AY565221">
    <property type="protein sequence ID" value="AAS74231.1"/>
    <property type="molecule type" value="Genomic_DNA"/>
</dbReference>
<dbReference type="EMBL" id="AY565222">
    <property type="protein sequence ID" value="AAS74232.1"/>
    <property type="molecule type" value="Genomic_DNA"/>
</dbReference>
<dbReference type="EMBL" id="AY565223">
    <property type="protein sequence ID" value="AAS74233.1"/>
    <property type="molecule type" value="Genomic_DNA"/>
</dbReference>
<dbReference type="EMBL" id="AY565224">
    <property type="protein sequence ID" value="AAS74234.1"/>
    <property type="molecule type" value="Genomic_DNA"/>
</dbReference>
<dbReference type="EMBL" id="AY565225">
    <property type="protein sequence ID" value="AAS74235.1"/>
    <property type="molecule type" value="Genomic_DNA"/>
</dbReference>
<dbReference type="EMBL" id="AY565226">
    <property type="protein sequence ID" value="AAS74236.1"/>
    <property type="molecule type" value="Genomic_DNA"/>
</dbReference>
<dbReference type="EMBL" id="AY565227">
    <property type="protein sequence ID" value="AAS74237.1"/>
    <property type="molecule type" value="Genomic_DNA"/>
</dbReference>
<dbReference type="EMBL" id="AY565228">
    <property type="protein sequence ID" value="AAS74238.1"/>
    <property type="molecule type" value="Genomic_DNA"/>
</dbReference>
<dbReference type="EMBL" id="AY565229">
    <property type="protein sequence ID" value="AAS74239.1"/>
    <property type="molecule type" value="Genomic_DNA"/>
</dbReference>
<dbReference type="EMBL" id="AY565230">
    <property type="protein sequence ID" value="AAS74240.1"/>
    <property type="molecule type" value="Genomic_DNA"/>
</dbReference>
<dbReference type="EMBL" id="AY565231">
    <property type="protein sequence ID" value="AAS74241.1"/>
    <property type="molecule type" value="Genomic_DNA"/>
</dbReference>
<dbReference type="EMBL" id="AY565232">
    <property type="protein sequence ID" value="AAS74242.1"/>
    <property type="molecule type" value="Genomic_DNA"/>
</dbReference>
<dbReference type="EMBL" id="AY565233">
    <property type="protein sequence ID" value="AAS74243.1"/>
    <property type="molecule type" value="Genomic_DNA"/>
</dbReference>
<dbReference type="EMBL" id="AY565234">
    <property type="protein sequence ID" value="AAS74244.1"/>
    <property type="molecule type" value="Genomic_DNA"/>
</dbReference>
<dbReference type="EMBL" id="AY565235">
    <property type="protein sequence ID" value="AAS74245.1"/>
    <property type="molecule type" value="Genomic_DNA"/>
</dbReference>
<dbReference type="EMBL" id="AY565236">
    <property type="protein sequence ID" value="AAS74246.1"/>
    <property type="molecule type" value="Genomic_DNA"/>
</dbReference>
<dbReference type="EMBL" id="AY565237">
    <property type="protein sequence ID" value="AAS74247.1"/>
    <property type="molecule type" value="Genomic_DNA"/>
</dbReference>
<dbReference type="EMBL" id="AY565238">
    <property type="protein sequence ID" value="AAS74248.1"/>
    <property type="molecule type" value="Genomic_DNA"/>
</dbReference>
<dbReference type="EMBL" id="AY565239">
    <property type="protein sequence ID" value="AAS74249.1"/>
    <property type="molecule type" value="Genomic_DNA"/>
</dbReference>
<dbReference type="EMBL" id="AY565240">
    <property type="protein sequence ID" value="AAS74250.1"/>
    <property type="molecule type" value="Genomic_DNA"/>
</dbReference>
<dbReference type="EMBL" id="AY565241">
    <property type="protein sequence ID" value="AAS74251.1"/>
    <property type="molecule type" value="Genomic_DNA"/>
</dbReference>
<dbReference type="EMBL" id="AY565242">
    <property type="protein sequence ID" value="AAS74252.1"/>
    <property type="molecule type" value="Genomic_DNA"/>
</dbReference>
<dbReference type="EMBL" id="AY565243">
    <property type="protein sequence ID" value="AAS74253.1"/>
    <property type="molecule type" value="Genomic_DNA"/>
</dbReference>
<dbReference type="EMBL" id="AY565244">
    <property type="protein sequence ID" value="AAS74254.1"/>
    <property type="molecule type" value="Genomic_DNA"/>
</dbReference>
<dbReference type="EMBL" id="AY565245">
    <property type="protein sequence ID" value="AAS74255.1"/>
    <property type="molecule type" value="Genomic_DNA"/>
</dbReference>
<dbReference type="EMBL" id="AY565246">
    <property type="protein sequence ID" value="AAS74256.1"/>
    <property type="molecule type" value="Genomic_DNA"/>
</dbReference>
<dbReference type="EMBL" id="AY565247">
    <property type="protein sequence ID" value="AAS74257.1"/>
    <property type="molecule type" value="Genomic_DNA"/>
</dbReference>
<dbReference type="EMBL" id="AY565248">
    <property type="protein sequence ID" value="AAS74258.1"/>
    <property type="molecule type" value="Genomic_DNA"/>
</dbReference>
<dbReference type="EMBL" id="AY565249">
    <property type="protein sequence ID" value="AAS74259.1"/>
    <property type="molecule type" value="Genomic_DNA"/>
</dbReference>
<dbReference type="EMBL" id="AY565250">
    <property type="protein sequence ID" value="AAS74260.1"/>
    <property type="molecule type" value="Genomic_DNA"/>
</dbReference>
<dbReference type="EMBL" id="AY565251">
    <property type="protein sequence ID" value="AAS74261.1"/>
    <property type="molecule type" value="Genomic_DNA"/>
</dbReference>
<dbReference type="EMBL" id="AY565252">
    <property type="protein sequence ID" value="AAS74262.1"/>
    <property type="molecule type" value="Genomic_DNA"/>
</dbReference>
<dbReference type="EMBL" id="AY565253">
    <property type="protein sequence ID" value="AAS74263.1"/>
    <property type="molecule type" value="Genomic_DNA"/>
</dbReference>
<dbReference type="EMBL" id="AY565254">
    <property type="protein sequence ID" value="AAS74264.1"/>
    <property type="molecule type" value="Genomic_DNA"/>
</dbReference>
<dbReference type="EMBL" id="AY565255">
    <property type="protein sequence ID" value="AAS74265.1"/>
    <property type="molecule type" value="Genomic_DNA"/>
</dbReference>
<dbReference type="EMBL" id="AY565256">
    <property type="protein sequence ID" value="AAS74266.1"/>
    <property type="molecule type" value="Genomic_DNA"/>
</dbReference>
<dbReference type="EMBL" id="AY565257">
    <property type="protein sequence ID" value="AAS74267.1"/>
    <property type="molecule type" value="Genomic_DNA"/>
</dbReference>
<dbReference type="EMBL" id="AY565258">
    <property type="protein sequence ID" value="AAS74268.1"/>
    <property type="molecule type" value="Genomic_DNA"/>
</dbReference>
<dbReference type="EMBL" id="AY565259">
    <property type="protein sequence ID" value="AAS74269.1"/>
    <property type="molecule type" value="Genomic_DNA"/>
</dbReference>
<dbReference type="EMBL" id="AY565260">
    <property type="protein sequence ID" value="AAS74270.1"/>
    <property type="molecule type" value="Genomic_DNA"/>
</dbReference>
<dbReference type="EMBL" id="AY565261">
    <property type="protein sequence ID" value="AAS74271.1"/>
    <property type="molecule type" value="Genomic_DNA"/>
</dbReference>
<dbReference type="EMBL" id="AY565262">
    <property type="protein sequence ID" value="AAS74272.1"/>
    <property type="molecule type" value="Genomic_DNA"/>
</dbReference>
<dbReference type="EMBL" id="AY565263">
    <property type="protein sequence ID" value="AAS74273.1"/>
    <property type="molecule type" value="Genomic_DNA"/>
</dbReference>
<dbReference type="EMBL" id="AY565264">
    <property type="protein sequence ID" value="AAS74274.1"/>
    <property type="molecule type" value="Genomic_DNA"/>
</dbReference>
<dbReference type="EMBL" id="AY565265">
    <property type="protein sequence ID" value="AAS74275.1"/>
    <property type="molecule type" value="Genomic_DNA"/>
</dbReference>
<dbReference type="EMBL" id="AY565266">
    <property type="protein sequence ID" value="AAS74276.1"/>
    <property type="molecule type" value="Genomic_DNA"/>
</dbReference>
<dbReference type="EMBL" id="AY565267">
    <property type="protein sequence ID" value="AAS74277.1"/>
    <property type="molecule type" value="Genomic_DNA"/>
</dbReference>
<dbReference type="EMBL" id="AY565268">
    <property type="protein sequence ID" value="AAS74278.1"/>
    <property type="molecule type" value="Genomic_DNA"/>
</dbReference>
<dbReference type="EMBL" id="AY565269">
    <property type="protein sequence ID" value="AAS74279.1"/>
    <property type="molecule type" value="Genomic_DNA"/>
</dbReference>
<dbReference type="EMBL" id="AY565270">
    <property type="protein sequence ID" value="AAS74280.1"/>
    <property type="molecule type" value="Genomic_DNA"/>
</dbReference>
<dbReference type="EMBL" id="AY565271">
    <property type="protein sequence ID" value="AAS74281.1"/>
    <property type="molecule type" value="Genomic_DNA"/>
</dbReference>
<dbReference type="EMBL" id="AY565272">
    <property type="protein sequence ID" value="AAS74282.1"/>
    <property type="molecule type" value="Genomic_DNA"/>
</dbReference>
<dbReference type="EMBL" id="AY565273">
    <property type="protein sequence ID" value="AAS74283.1"/>
    <property type="molecule type" value="Genomic_DNA"/>
</dbReference>
<dbReference type="EMBL" id="AY565274">
    <property type="protein sequence ID" value="AAS74284.1"/>
    <property type="molecule type" value="Genomic_DNA"/>
</dbReference>
<dbReference type="EMBL" id="AY565275">
    <property type="protein sequence ID" value="AAS74285.1"/>
    <property type="molecule type" value="Genomic_DNA"/>
</dbReference>
<dbReference type="EMBL" id="AY565276">
    <property type="protein sequence ID" value="AAS74286.1"/>
    <property type="molecule type" value="Genomic_DNA"/>
</dbReference>
<dbReference type="EMBL" id="AY565277">
    <property type="protein sequence ID" value="AAS74287.1"/>
    <property type="molecule type" value="Genomic_DNA"/>
</dbReference>
<dbReference type="EMBL" id="AY565278">
    <property type="protein sequence ID" value="AAS74288.1"/>
    <property type="molecule type" value="Genomic_DNA"/>
</dbReference>
<dbReference type="EMBL" id="AY565279">
    <property type="protein sequence ID" value="AAS74289.1"/>
    <property type="molecule type" value="Genomic_DNA"/>
</dbReference>
<dbReference type="EMBL" id="AY565280">
    <property type="protein sequence ID" value="AAS74290.1"/>
    <property type="molecule type" value="Genomic_DNA"/>
</dbReference>
<dbReference type="EMBL" id="AY565281">
    <property type="protein sequence ID" value="AAS74291.1"/>
    <property type="molecule type" value="Genomic_DNA"/>
</dbReference>
<dbReference type="EMBL" id="AY565282">
    <property type="protein sequence ID" value="AAS74292.1"/>
    <property type="molecule type" value="Genomic_DNA"/>
</dbReference>
<dbReference type="EMBL" id="AY565283">
    <property type="protein sequence ID" value="AAS74293.1"/>
    <property type="molecule type" value="Genomic_DNA"/>
</dbReference>
<dbReference type="EMBL" id="AY565284">
    <property type="protein sequence ID" value="AAS74294.1"/>
    <property type="molecule type" value="Genomic_DNA"/>
</dbReference>
<dbReference type="EMBL" id="AY565285">
    <property type="protein sequence ID" value="AAS74295.1"/>
    <property type="molecule type" value="Genomic_DNA"/>
</dbReference>
<dbReference type="EMBL" id="AY565286">
    <property type="protein sequence ID" value="AAS74296.1"/>
    <property type="molecule type" value="Genomic_DNA"/>
</dbReference>
<dbReference type="EMBL" id="AY565287">
    <property type="protein sequence ID" value="AAS74297.1"/>
    <property type="molecule type" value="Genomic_DNA"/>
</dbReference>
<dbReference type="EMBL" id="AY565288">
    <property type="protein sequence ID" value="AAS74298.1"/>
    <property type="molecule type" value="Genomic_DNA"/>
</dbReference>
<dbReference type="EMBL" id="AY565289">
    <property type="protein sequence ID" value="AAS74299.1"/>
    <property type="molecule type" value="Genomic_DNA"/>
</dbReference>
<dbReference type="EMBL" id="AY565290">
    <property type="protein sequence ID" value="AAS74300.1"/>
    <property type="molecule type" value="Genomic_DNA"/>
</dbReference>
<dbReference type="EMBL" id="AY565291">
    <property type="protein sequence ID" value="AAS74301.1"/>
    <property type="molecule type" value="Genomic_DNA"/>
</dbReference>
<dbReference type="EMBL" id="AY565292">
    <property type="protein sequence ID" value="AAS74302.1"/>
    <property type="molecule type" value="Genomic_DNA"/>
</dbReference>
<dbReference type="EMBL" id="AY565293">
    <property type="protein sequence ID" value="AAS74303.1"/>
    <property type="molecule type" value="Genomic_DNA"/>
</dbReference>
<dbReference type="EMBL" id="AY565294">
    <property type="protein sequence ID" value="AAS74304.1"/>
    <property type="molecule type" value="Genomic_DNA"/>
</dbReference>
<dbReference type="EMBL" id="AY565295">
    <property type="protein sequence ID" value="AAS74305.1"/>
    <property type="molecule type" value="Genomic_DNA"/>
</dbReference>
<dbReference type="EMBL" id="AY565296">
    <property type="protein sequence ID" value="AAS74306.1"/>
    <property type="molecule type" value="Genomic_DNA"/>
</dbReference>
<dbReference type="EMBL" id="AY565297">
    <property type="protein sequence ID" value="AAS74307.1"/>
    <property type="molecule type" value="Genomic_DNA"/>
</dbReference>
<dbReference type="EMBL" id="AY565298">
    <property type="protein sequence ID" value="AAS74308.1"/>
    <property type="molecule type" value="Genomic_DNA"/>
</dbReference>
<dbReference type="EMBL" id="AY565299">
    <property type="protein sequence ID" value="AAS74309.1"/>
    <property type="molecule type" value="Genomic_DNA"/>
</dbReference>
<dbReference type="EMBL" id="AY565300">
    <property type="protein sequence ID" value="AAS74310.1"/>
    <property type="molecule type" value="Genomic_DNA"/>
</dbReference>
<dbReference type="EMBL" id="AY565301">
    <property type="protein sequence ID" value="AAS74311.1"/>
    <property type="molecule type" value="Genomic_DNA"/>
</dbReference>
<dbReference type="EMBL" id="AY565302">
    <property type="protein sequence ID" value="AAS74312.1"/>
    <property type="molecule type" value="Genomic_DNA"/>
</dbReference>
<dbReference type="EMBL" id="AY565303">
    <property type="protein sequence ID" value="AAS74313.1"/>
    <property type="molecule type" value="Genomic_DNA"/>
</dbReference>
<dbReference type="EMBL" id="AY565304">
    <property type="protein sequence ID" value="AAS74314.1"/>
    <property type="molecule type" value="Genomic_DNA"/>
</dbReference>
<dbReference type="EMBL" id="AY565305">
    <property type="protein sequence ID" value="AAS74315.1"/>
    <property type="molecule type" value="Genomic_DNA"/>
</dbReference>
<dbReference type="EMBL" id="AY565306">
    <property type="protein sequence ID" value="AAS74316.1"/>
    <property type="molecule type" value="Genomic_DNA"/>
</dbReference>
<dbReference type="EMBL" id="AY565307">
    <property type="protein sequence ID" value="AAS74317.1"/>
    <property type="molecule type" value="Genomic_DNA"/>
</dbReference>
<dbReference type="EMBL" id="AY565308">
    <property type="protein sequence ID" value="AAS74318.1"/>
    <property type="molecule type" value="Genomic_DNA"/>
</dbReference>
<dbReference type="EMBL" id="AY565309">
    <property type="protein sequence ID" value="AAS74319.1"/>
    <property type="molecule type" value="Genomic_DNA"/>
</dbReference>
<dbReference type="EMBL" id="AY565310">
    <property type="protein sequence ID" value="AAS74320.1"/>
    <property type="molecule type" value="Genomic_DNA"/>
</dbReference>
<dbReference type="EMBL" id="AY565311">
    <property type="protein sequence ID" value="AAS74321.1"/>
    <property type="molecule type" value="Genomic_DNA"/>
</dbReference>
<dbReference type="EMBL" id="AY565312">
    <property type="protein sequence ID" value="AAS74322.1"/>
    <property type="molecule type" value="Genomic_DNA"/>
</dbReference>
<dbReference type="EMBL" id="AY565313">
    <property type="protein sequence ID" value="AAS74323.1"/>
    <property type="molecule type" value="Genomic_DNA"/>
</dbReference>
<dbReference type="EMBL" id="AY565314">
    <property type="protein sequence ID" value="AAS74324.1"/>
    <property type="molecule type" value="Genomic_DNA"/>
</dbReference>
<dbReference type="EMBL" id="AY565315">
    <property type="protein sequence ID" value="AAS74325.1"/>
    <property type="molecule type" value="Genomic_DNA"/>
</dbReference>
<dbReference type="EMBL" id="AY565316">
    <property type="protein sequence ID" value="AAS74326.1"/>
    <property type="molecule type" value="Genomic_DNA"/>
</dbReference>
<dbReference type="EMBL" id="AY565317">
    <property type="protein sequence ID" value="AAS74327.1"/>
    <property type="molecule type" value="Genomic_DNA"/>
</dbReference>
<dbReference type="EMBL" id="AY565318">
    <property type="protein sequence ID" value="AAS74328.1"/>
    <property type="molecule type" value="Genomic_DNA"/>
</dbReference>
<dbReference type="EMBL" id="AY565319">
    <property type="protein sequence ID" value="AAS74329.1"/>
    <property type="molecule type" value="Genomic_DNA"/>
</dbReference>
<dbReference type="EMBL" id="AY565320">
    <property type="protein sequence ID" value="AAS74330.1"/>
    <property type="molecule type" value="Genomic_DNA"/>
</dbReference>
<dbReference type="EMBL" id="AY565321">
    <property type="protein sequence ID" value="AAS74331.1"/>
    <property type="molecule type" value="Genomic_DNA"/>
</dbReference>
<dbReference type="EMBL" id="AY565322">
    <property type="protein sequence ID" value="AAS74332.1"/>
    <property type="molecule type" value="Genomic_DNA"/>
</dbReference>
<dbReference type="EMBL" id="AY565323">
    <property type="protein sequence ID" value="AAS74333.1"/>
    <property type="molecule type" value="Genomic_DNA"/>
</dbReference>
<dbReference type="EMBL" id="AY565324">
    <property type="protein sequence ID" value="AAS74334.1"/>
    <property type="molecule type" value="Genomic_DNA"/>
</dbReference>
<dbReference type="EMBL" id="AY565325">
    <property type="protein sequence ID" value="AAS74335.1"/>
    <property type="molecule type" value="Genomic_DNA"/>
</dbReference>
<dbReference type="EMBL" id="AY565326">
    <property type="protein sequence ID" value="AAS74336.1"/>
    <property type="molecule type" value="Genomic_DNA"/>
</dbReference>
<dbReference type="EMBL" id="AY565327">
    <property type="protein sequence ID" value="AAS74337.1"/>
    <property type="molecule type" value="Genomic_DNA"/>
</dbReference>
<dbReference type="EMBL" id="AY565328">
    <property type="protein sequence ID" value="AAS74338.1"/>
    <property type="molecule type" value="Genomic_DNA"/>
</dbReference>
<dbReference type="EMBL" id="AY565329">
    <property type="protein sequence ID" value="AAS74339.1"/>
    <property type="molecule type" value="Genomic_DNA"/>
</dbReference>
<dbReference type="EMBL" id="AY565330">
    <property type="protein sequence ID" value="AAS74340.1"/>
    <property type="molecule type" value="Genomic_DNA"/>
</dbReference>
<dbReference type="EMBL" id="AY565331">
    <property type="protein sequence ID" value="AAS74341.1"/>
    <property type="molecule type" value="Genomic_DNA"/>
</dbReference>
<dbReference type="EMBL" id="AY565332">
    <property type="protein sequence ID" value="AAS74342.1"/>
    <property type="molecule type" value="Genomic_DNA"/>
</dbReference>
<dbReference type="EMBL" id="AY565333">
    <property type="protein sequence ID" value="AAS74343.1"/>
    <property type="molecule type" value="Genomic_DNA"/>
</dbReference>
<dbReference type="EMBL" id="AY565334">
    <property type="protein sequence ID" value="AAS74344.1"/>
    <property type="molecule type" value="Genomic_DNA"/>
</dbReference>
<dbReference type="EMBL" id="AY565335">
    <property type="protein sequence ID" value="AAS74345.1"/>
    <property type="molecule type" value="Genomic_DNA"/>
</dbReference>
<dbReference type="EMBL" id="AY565336">
    <property type="protein sequence ID" value="AAS74346.1"/>
    <property type="molecule type" value="Genomic_DNA"/>
</dbReference>
<dbReference type="EMBL" id="AY565337">
    <property type="protein sequence ID" value="AAS74347.1"/>
    <property type="molecule type" value="Genomic_DNA"/>
</dbReference>
<dbReference type="EMBL" id="AY565338">
    <property type="protein sequence ID" value="AAS74348.1"/>
    <property type="molecule type" value="Genomic_DNA"/>
</dbReference>
<dbReference type="EMBL" id="AY565339">
    <property type="protein sequence ID" value="AAS74349.1"/>
    <property type="molecule type" value="Genomic_DNA"/>
</dbReference>
<dbReference type="EMBL" id="AY565340">
    <property type="protein sequence ID" value="AAS74350.1"/>
    <property type="molecule type" value="Genomic_DNA"/>
</dbReference>
<dbReference type="EMBL" id="AY565341">
    <property type="protein sequence ID" value="AAS74351.1"/>
    <property type="molecule type" value="Genomic_DNA"/>
</dbReference>
<dbReference type="EMBL" id="AY565342">
    <property type="protein sequence ID" value="AAS74352.1"/>
    <property type="molecule type" value="Genomic_DNA"/>
</dbReference>
<dbReference type="EMBL" id="AY565343">
    <property type="protein sequence ID" value="AAS74353.1"/>
    <property type="molecule type" value="Genomic_DNA"/>
</dbReference>
<dbReference type="EMBL" id="AY565344">
    <property type="protein sequence ID" value="AAS74354.1"/>
    <property type="molecule type" value="Genomic_DNA"/>
</dbReference>
<dbReference type="EMBL" id="AY565345">
    <property type="protein sequence ID" value="AAS74355.1"/>
    <property type="molecule type" value="Genomic_DNA"/>
</dbReference>
<dbReference type="EMBL" id="AY565346">
    <property type="protein sequence ID" value="AAS74356.1"/>
    <property type="molecule type" value="Genomic_DNA"/>
</dbReference>
<dbReference type="EMBL" id="AY565347">
    <property type="protein sequence ID" value="AAS74357.1"/>
    <property type="molecule type" value="Genomic_DNA"/>
</dbReference>
<dbReference type="EMBL" id="AY565348">
    <property type="protein sequence ID" value="AAS74358.1"/>
    <property type="molecule type" value="Genomic_DNA"/>
</dbReference>
<dbReference type="EMBL" id="AY565349">
    <property type="protein sequence ID" value="AAS74359.1"/>
    <property type="molecule type" value="Genomic_DNA"/>
</dbReference>
<dbReference type="EMBL" id="AY565350">
    <property type="protein sequence ID" value="AAS74360.1"/>
    <property type="molecule type" value="Genomic_DNA"/>
</dbReference>
<dbReference type="EMBL" id="AY565351">
    <property type="protein sequence ID" value="AAS74361.1"/>
    <property type="molecule type" value="Genomic_DNA"/>
</dbReference>
<dbReference type="EMBL" id="AY565352">
    <property type="protein sequence ID" value="AAS74362.1"/>
    <property type="molecule type" value="Genomic_DNA"/>
</dbReference>
<dbReference type="EMBL" id="AY565353">
    <property type="protein sequence ID" value="AAS74363.1"/>
    <property type="molecule type" value="Genomic_DNA"/>
</dbReference>
<dbReference type="EMBL" id="AY565354">
    <property type="protein sequence ID" value="AAS74364.1"/>
    <property type="molecule type" value="Genomic_DNA"/>
</dbReference>
<dbReference type="EMBL" id="AY565355">
    <property type="protein sequence ID" value="AAS74365.1"/>
    <property type="molecule type" value="Genomic_DNA"/>
</dbReference>
<dbReference type="EMBL" id="AY565356">
    <property type="protein sequence ID" value="AAS74366.1"/>
    <property type="molecule type" value="Genomic_DNA"/>
</dbReference>
<dbReference type="EMBL" id="AY565357">
    <property type="protein sequence ID" value="AAS74367.1"/>
    <property type="molecule type" value="Genomic_DNA"/>
</dbReference>
<dbReference type="EMBL" id="AY565358">
    <property type="protein sequence ID" value="AAS74368.1"/>
    <property type="molecule type" value="Genomic_DNA"/>
</dbReference>
<dbReference type="EMBL" id="AY565359">
    <property type="protein sequence ID" value="AAS74369.1"/>
    <property type="molecule type" value="Genomic_DNA"/>
</dbReference>
<dbReference type="EMBL" id="AY565360">
    <property type="protein sequence ID" value="AAS74370.1"/>
    <property type="molecule type" value="Genomic_DNA"/>
</dbReference>
<dbReference type="EMBL" id="AY565361">
    <property type="protein sequence ID" value="AAS74371.1"/>
    <property type="molecule type" value="Genomic_DNA"/>
</dbReference>
<dbReference type="EMBL" id="AY565362">
    <property type="protein sequence ID" value="AAS74372.1"/>
    <property type="molecule type" value="Genomic_DNA"/>
</dbReference>
<dbReference type="EMBL" id="AY565363">
    <property type="protein sequence ID" value="AAS74373.1"/>
    <property type="molecule type" value="Genomic_DNA"/>
</dbReference>
<dbReference type="EMBL" id="AY565364">
    <property type="protein sequence ID" value="AAS74374.1"/>
    <property type="molecule type" value="Genomic_DNA"/>
</dbReference>
<dbReference type="EMBL" id="AY565365">
    <property type="protein sequence ID" value="AAS74375.1"/>
    <property type="molecule type" value="Genomic_DNA"/>
</dbReference>
<dbReference type="EMBL" id="AY565366">
    <property type="protein sequence ID" value="AAS74376.1"/>
    <property type="molecule type" value="Genomic_DNA"/>
</dbReference>
<dbReference type="EMBL" id="AY565367">
    <property type="protein sequence ID" value="AAS74377.1"/>
    <property type="molecule type" value="Genomic_DNA"/>
</dbReference>
<dbReference type="EMBL" id="AY565368">
    <property type="protein sequence ID" value="AAS74378.1"/>
    <property type="molecule type" value="Genomic_DNA"/>
</dbReference>
<dbReference type="PIR" id="S19155">
    <property type="entry name" value="S19155"/>
</dbReference>
<dbReference type="RefSeq" id="NP_725849.1">
    <property type="nucleotide sequence ID" value="NM_166322.2"/>
</dbReference>
<dbReference type="SMR" id="P28285"/>
<dbReference type="FunCoup" id="P28285">
    <property type="interactions" value="188"/>
</dbReference>
<dbReference type="STRING" id="7227.FBpp0423127"/>
<dbReference type="GlyCosmos" id="P28285">
    <property type="glycosylation" value="8 sites, No reported glycans"/>
</dbReference>
<dbReference type="GlyGen" id="P28285">
    <property type="glycosylation" value="9 sites"/>
</dbReference>
<dbReference type="PaxDb" id="7227-FBpp0085761"/>
<dbReference type="EnsemblMetazoa" id="FBtr0086577">
    <property type="protein sequence ID" value="FBpp0085761"/>
    <property type="gene ID" value="FBgn0004168"/>
</dbReference>
<dbReference type="GeneID" id="37196"/>
<dbReference type="KEGG" id="dme:Dmel_CG16720"/>
<dbReference type="AGR" id="FB:FBgn0004168"/>
<dbReference type="CTD" id="37196"/>
<dbReference type="FlyBase" id="FBgn0004168">
    <property type="gene designation" value="5-HT1A"/>
</dbReference>
<dbReference type="VEuPathDB" id="VectorBase:FBgn0004168"/>
<dbReference type="eggNOG" id="KOG3656">
    <property type="taxonomic scope" value="Eukaryota"/>
</dbReference>
<dbReference type="HOGENOM" id="CLU_009579_11_1_1"/>
<dbReference type="InParanoid" id="P28285"/>
<dbReference type="OrthoDB" id="10034726at2759"/>
<dbReference type="PhylomeDB" id="P28285"/>
<dbReference type="Reactome" id="R-DME-390650">
    <property type="pathway name" value="Histamine receptors"/>
</dbReference>
<dbReference type="Reactome" id="R-DME-390651">
    <property type="pathway name" value="Dopamine receptors"/>
</dbReference>
<dbReference type="Reactome" id="R-DME-390666">
    <property type="pathway name" value="Serotonin receptors"/>
</dbReference>
<dbReference type="Reactome" id="R-DME-418555">
    <property type="pathway name" value="G alpha (s) signalling events"/>
</dbReference>
<dbReference type="Reactome" id="R-DME-418594">
    <property type="pathway name" value="G alpha (i) signalling events"/>
</dbReference>
<dbReference type="BioGRID-ORCS" id="37196">
    <property type="hits" value="0 hits in 3 CRISPR screens"/>
</dbReference>
<dbReference type="GenomeRNAi" id="37196"/>
<dbReference type="PRO" id="PR:P28285"/>
<dbReference type="Proteomes" id="UP000000803">
    <property type="component" value="Chromosome 2R"/>
</dbReference>
<dbReference type="Bgee" id="FBgn0004168">
    <property type="expression patterns" value="Expressed in medullary tangential neuron Mt1 (Drosophila) in brain and 107 other cell types or tissues"/>
</dbReference>
<dbReference type="ExpressionAtlas" id="P28285">
    <property type="expression patterns" value="baseline and differential"/>
</dbReference>
<dbReference type="GO" id="GO:0030425">
    <property type="term" value="C:dendrite"/>
    <property type="evidence" value="ECO:0000318"/>
    <property type="project" value="GO_Central"/>
</dbReference>
<dbReference type="GO" id="GO:0016020">
    <property type="term" value="C:membrane"/>
    <property type="evidence" value="ECO:0000250"/>
    <property type="project" value="FlyBase"/>
</dbReference>
<dbReference type="GO" id="GO:0005886">
    <property type="term" value="C:plasma membrane"/>
    <property type="evidence" value="ECO:0000318"/>
    <property type="project" value="GO_Central"/>
</dbReference>
<dbReference type="GO" id="GO:0045202">
    <property type="term" value="C:synapse"/>
    <property type="evidence" value="ECO:0007669"/>
    <property type="project" value="GOC"/>
</dbReference>
<dbReference type="GO" id="GO:0008227">
    <property type="term" value="F:G protein-coupled amine receptor activity"/>
    <property type="evidence" value="ECO:0000250"/>
    <property type="project" value="FlyBase"/>
</dbReference>
<dbReference type="GO" id="GO:0004993">
    <property type="term" value="F:G protein-coupled serotonin receptor activity"/>
    <property type="evidence" value="ECO:0000314"/>
    <property type="project" value="FlyBase"/>
</dbReference>
<dbReference type="GO" id="GO:0001586">
    <property type="term" value="F:Gi/o-coupled serotonin receptor activity"/>
    <property type="evidence" value="ECO:0000303"/>
    <property type="project" value="FlyBase"/>
</dbReference>
<dbReference type="GO" id="GO:0030594">
    <property type="term" value="F:neurotransmitter receptor activity"/>
    <property type="evidence" value="ECO:0000318"/>
    <property type="project" value="GO_Central"/>
</dbReference>
<dbReference type="GO" id="GO:0007198">
    <property type="term" value="P:adenylate cyclase-inhibiting serotonin receptor signaling pathway"/>
    <property type="evidence" value="ECO:0000314"/>
    <property type="project" value="FlyBase"/>
</dbReference>
<dbReference type="GO" id="GO:0007615">
    <property type="term" value="P:anesthesia-resistant memory"/>
    <property type="evidence" value="ECO:0000314"/>
    <property type="project" value="FlyBase"/>
</dbReference>
<dbReference type="GO" id="GO:0007268">
    <property type="term" value="P:chemical synaptic transmission"/>
    <property type="evidence" value="ECO:0000318"/>
    <property type="project" value="GO_Central"/>
</dbReference>
<dbReference type="GO" id="GO:0007187">
    <property type="term" value="P:G protein-coupled receptor signaling pathway, coupled to cyclic nucleotide second messenger"/>
    <property type="evidence" value="ECO:0000318"/>
    <property type="project" value="GO_Central"/>
</dbReference>
<dbReference type="GO" id="GO:0002121">
    <property type="term" value="P:inter-male aggressive behavior"/>
    <property type="evidence" value="ECO:0000315"/>
    <property type="project" value="FlyBase"/>
</dbReference>
<dbReference type="GO" id="GO:0008049">
    <property type="term" value="P:male courtship behavior"/>
    <property type="evidence" value="ECO:0000315"/>
    <property type="project" value="FlyBase"/>
</dbReference>
<dbReference type="GO" id="GO:0007208">
    <property type="term" value="P:phospholipase C-activating serotonin receptor signaling pathway"/>
    <property type="evidence" value="ECO:0000314"/>
    <property type="project" value="FlyBase"/>
</dbReference>
<dbReference type="GO" id="GO:0045187">
    <property type="term" value="P:regulation of circadian sleep/wake cycle, sleep"/>
    <property type="evidence" value="ECO:0000315"/>
    <property type="project" value="FlyBase"/>
</dbReference>
<dbReference type="GO" id="GO:0007210">
    <property type="term" value="P:serotonin receptor signaling pathway"/>
    <property type="evidence" value="ECO:0000314"/>
    <property type="project" value="FlyBase"/>
</dbReference>
<dbReference type="CDD" id="cd15331">
    <property type="entry name" value="7tmA_5-HT1A_invertebrates"/>
    <property type="match status" value="1"/>
</dbReference>
<dbReference type="FunFam" id="1.20.1070.10:FF:000299">
    <property type="entry name" value="5-hydroxytryptamine receptor 2B"/>
    <property type="match status" value="1"/>
</dbReference>
<dbReference type="FunFam" id="1.20.1070.10:FF:000310">
    <property type="entry name" value="5-hydroxytryptamine receptor 2B"/>
    <property type="match status" value="1"/>
</dbReference>
<dbReference type="Gene3D" id="1.20.1070.10">
    <property type="entry name" value="Rhodopsin 7-helix transmembrane proteins"/>
    <property type="match status" value="2"/>
</dbReference>
<dbReference type="InterPro" id="IPR000276">
    <property type="entry name" value="GPCR_Rhodpsn"/>
</dbReference>
<dbReference type="InterPro" id="IPR017452">
    <property type="entry name" value="GPCR_Rhodpsn_7TM"/>
</dbReference>
<dbReference type="PANTHER" id="PTHR24248:SF200">
    <property type="entry name" value="5-HYDROXYTRYPTAMINE RECEPTOR 1B-LIKE ISOFORM X1"/>
    <property type="match status" value="1"/>
</dbReference>
<dbReference type="PANTHER" id="PTHR24248">
    <property type="entry name" value="ADRENERGIC RECEPTOR-RELATED G-PROTEIN COUPLED RECEPTOR"/>
    <property type="match status" value="1"/>
</dbReference>
<dbReference type="Pfam" id="PF00001">
    <property type="entry name" value="7tm_1"/>
    <property type="match status" value="1"/>
</dbReference>
<dbReference type="PRINTS" id="PR00237">
    <property type="entry name" value="GPCRRHODOPSN"/>
</dbReference>
<dbReference type="SMART" id="SM01381">
    <property type="entry name" value="7TM_GPCR_Srsx"/>
    <property type="match status" value="1"/>
</dbReference>
<dbReference type="SUPFAM" id="SSF81321">
    <property type="entry name" value="Family A G protein-coupled receptor-like"/>
    <property type="match status" value="1"/>
</dbReference>
<dbReference type="PROSITE" id="PS00237">
    <property type="entry name" value="G_PROTEIN_RECEP_F1_1"/>
    <property type="match status" value="1"/>
</dbReference>
<dbReference type="PROSITE" id="PS50262">
    <property type="entry name" value="G_PROTEIN_RECEP_F1_2"/>
    <property type="match status" value="1"/>
</dbReference>
<name>5HT2A_DROME</name>
<proteinExistence type="evidence at transcript level"/>
<organism>
    <name type="scientific">Drosophila melanogaster</name>
    <name type="common">Fruit fly</name>
    <dbReference type="NCBI Taxonomy" id="7227"/>
    <lineage>
        <taxon>Eukaryota</taxon>
        <taxon>Metazoa</taxon>
        <taxon>Ecdysozoa</taxon>
        <taxon>Arthropoda</taxon>
        <taxon>Hexapoda</taxon>
        <taxon>Insecta</taxon>
        <taxon>Pterygota</taxon>
        <taxon>Neoptera</taxon>
        <taxon>Endopterygota</taxon>
        <taxon>Diptera</taxon>
        <taxon>Brachycera</taxon>
        <taxon>Muscomorpha</taxon>
        <taxon>Ephydroidea</taxon>
        <taxon>Drosophilidae</taxon>
        <taxon>Drosophila</taxon>
        <taxon>Sophophora</taxon>
    </lineage>
</organism>
<keyword id="KW-1003">Cell membrane</keyword>
<keyword id="KW-1015">Disulfide bond</keyword>
<keyword id="KW-0297">G-protein coupled receptor</keyword>
<keyword id="KW-0325">Glycoprotein</keyword>
<keyword id="KW-0472">Membrane</keyword>
<keyword id="KW-0675">Receptor</keyword>
<keyword id="KW-1185">Reference proteome</keyword>
<keyword id="KW-0807">Transducer</keyword>
<keyword id="KW-0812">Transmembrane</keyword>
<keyword id="KW-1133">Transmembrane helix</keyword>
<reference key="1">
    <citation type="journal article" date="1992" name="EMBO J.">
        <title>A family of Drosophila serotonin receptors with distinct intracellular signalling properties and expression patterns.</title>
        <authorList>
            <person name="Saudou F."/>
            <person name="Boschert U."/>
            <person name="Amlaiky N."/>
            <person name="Plassat J.-L."/>
            <person name="Hen R."/>
        </authorList>
    </citation>
    <scope>NUCLEOTIDE SEQUENCE [MRNA]</scope>
    <scope>VARIANTS ALA-96 AND ASN-196</scope>
    <source>
        <strain>Canton-S</strain>
        <strain>Oregon-R</strain>
        <tissue>Head</tissue>
    </source>
</reference>
<reference key="2">
    <citation type="journal article" date="2000" name="Science">
        <title>The genome sequence of Drosophila melanogaster.</title>
        <authorList>
            <person name="Adams M.D."/>
            <person name="Celniker S.E."/>
            <person name="Holt R.A."/>
            <person name="Evans C.A."/>
            <person name="Gocayne J.D."/>
            <person name="Amanatides P.G."/>
            <person name="Scherer S.E."/>
            <person name="Li P.W."/>
            <person name="Hoskins R.A."/>
            <person name="Galle R.F."/>
            <person name="George R.A."/>
            <person name="Lewis S.E."/>
            <person name="Richards S."/>
            <person name="Ashburner M."/>
            <person name="Henderson S.N."/>
            <person name="Sutton G.G."/>
            <person name="Wortman J.R."/>
            <person name="Yandell M.D."/>
            <person name="Zhang Q."/>
            <person name="Chen L.X."/>
            <person name="Brandon R.C."/>
            <person name="Rogers Y.-H.C."/>
            <person name="Blazej R.G."/>
            <person name="Champe M."/>
            <person name="Pfeiffer B.D."/>
            <person name="Wan K.H."/>
            <person name="Doyle C."/>
            <person name="Baxter E.G."/>
            <person name="Helt G."/>
            <person name="Nelson C.R."/>
            <person name="Miklos G.L.G."/>
            <person name="Abril J.F."/>
            <person name="Agbayani A."/>
            <person name="An H.-J."/>
            <person name="Andrews-Pfannkoch C."/>
            <person name="Baldwin D."/>
            <person name="Ballew R.M."/>
            <person name="Basu A."/>
            <person name="Baxendale J."/>
            <person name="Bayraktaroglu L."/>
            <person name="Beasley E.M."/>
            <person name="Beeson K.Y."/>
            <person name="Benos P.V."/>
            <person name="Berman B.P."/>
            <person name="Bhandari D."/>
            <person name="Bolshakov S."/>
            <person name="Borkova D."/>
            <person name="Botchan M.R."/>
            <person name="Bouck J."/>
            <person name="Brokstein P."/>
            <person name="Brottier P."/>
            <person name="Burtis K.C."/>
            <person name="Busam D.A."/>
            <person name="Butler H."/>
            <person name="Cadieu E."/>
            <person name="Center A."/>
            <person name="Chandra I."/>
            <person name="Cherry J.M."/>
            <person name="Cawley S."/>
            <person name="Dahlke C."/>
            <person name="Davenport L.B."/>
            <person name="Davies P."/>
            <person name="de Pablos B."/>
            <person name="Delcher A."/>
            <person name="Deng Z."/>
            <person name="Mays A.D."/>
            <person name="Dew I."/>
            <person name="Dietz S.M."/>
            <person name="Dodson K."/>
            <person name="Doup L.E."/>
            <person name="Downes M."/>
            <person name="Dugan-Rocha S."/>
            <person name="Dunkov B.C."/>
            <person name="Dunn P."/>
            <person name="Durbin K.J."/>
            <person name="Evangelista C.C."/>
            <person name="Ferraz C."/>
            <person name="Ferriera S."/>
            <person name="Fleischmann W."/>
            <person name="Fosler C."/>
            <person name="Gabrielian A.E."/>
            <person name="Garg N.S."/>
            <person name="Gelbart W.M."/>
            <person name="Glasser K."/>
            <person name="Glodek A."/>
            <person name="Gong F."/>
            <person name="Gorrell J.H."/>
            <person name="Gu Z."/>
            <person name="Guan P."/>
            <person name="Harris M."/>
            <person name="Harris N.L."/>
            <person name="Harvey D.A."/>
            <person name="Heiman T.J."/>
            <person name="Hernandez J.R."/>
            <person name="Houck J."/>
            <person name="Hostin D."/>
            <person name="Houston K.A."/>
            <person name="Howland T.J."/>
            <person name="Wei M.-H."/>
            <person name="Ibegwam C."/>
            <person name="Jalali M."/>
            <person name="Kalush F."/>
            <person name="Karpen G.H."/>
            <person name="Ke Z."/>
            <person name="Kennison J.A."/>
            <person name="Ketchum K.A."/>
            <person name="Kimmel B.E."/>
            <person name="Kodira C.D."/>
            <person name="Kraft C.L."/>
            <person name="Kravitz S."/>
            <person name="Kulp D."/>
            <person name="Lai Z."/>
            <person name="Lasko P."/>
            <person name="Lei Y."/>
            <person name="Levitsky A.A."/>
            <person name="Li J.H."/>
            <person name="Li Z."/>
            <person name="Liang Y."/>
            <person name="Lin X."/>
            <person name="Liu X."/>
            <person name="Mattei B."/>
            <person name="McIntosh T.C."/>
            <person name="McLeod M.P."/>
            <person name="McPherson D."/>
            <person name="Merkulov G."/>
            <person name="Milshina N.V."/>
            <person name="Mobarry C."/>
            <person name="Morris J."/>
            <person name="Moshrefi A."/>
            <person name="Mount S.M."/>
            <person name="Moy M."/>
            <person name="Murphy B."/>
            <person name="Murphy L."/>
            <person name="Muzny D.M."/>
            <person name="Nelson D.L."/>
            <person name="Nelson D.R."/>
            <person name="Nelson K.A."/>
            <person name="Nixon K."/>
            <person name="Nusskern D.R."/>
            <person name="Pacleb J.M."/>
            <person name="Palazzolo M."/>
            <person name="Pittman G.S."/>
            <person name="Pan S."/>
            <person name="Pollard J."/>
            <person name="Puri V."/>
            <person name="Reese M.G."/>
            <person name="Reinert K."/>
            <person name="Remington K."/>
            <person name="Saunders R.D.C."/>
            <person name="Scheeler F."/>
            <person name="Shen H."/>
            <person name="Shue B.C."/>
            <person name="Siden-Kiamos I."/>
            <person name="Simpson M."/>
            <person name="Skupski M.P."/>
            <person name="Smith T.J."/>
            <person name="Spier E."/>
            <person name="Spradling A.C."/>
            <person name="Stapleton M."/>
            <person name="Strong R."/>
            <person name="Sun E."/>
            <person name="Svirskas R."/>
            <person name="Tector C."/>
            <person name="Turner R."/>
            <person name="Venter E."/>
            <person name="Wang A.H."/>
            <person name="Wang X."/>
            <person name="Wang Z.-Y."/>
            <person name="Wassarman D.A."/>
            <person name="Weinstock G.M."/>
            <person name="Weissenbach J."/>
            <person name="Williams S.M."/>
            <person name="Woodage T."/>
            <person name="Worley K.C."/>
            <person name="Wu D."/>
            <person name="Yang S."/>
            <person name="Yao Q.A."/>
            <person name="Ye J."/>
            <person name="Yeh R.-F."/>
            <person name="Zaveri J.S."/>
            <person name="Zhan M."/>
            <person name="Zhang G."/>
            <person name="Zhao Q."/>
            <person name="Zheng L."/>
            <person name="Zheng X.H."/>
            <person name="Zhong F.N."/>
            <person name="Zhong W."/>
            <person name="Zhou X."/>
            <person name="Zhu S.C."/>
            <person name="Zhu X."/>
            <person name="Smith H.O."/>
            <person name="Gibbs R.A."/>
            <person name="Myers E.W."/>
            <person name="Rubin G.M."/>
            <person name="Venter J.C."/>
        </authorList>
    </citation>
    <scope>NUCLEOTIDE SEQUENCE [LARGE SCALE GENOMIC DNA]</scope>
    <scope>VARIANT MET-588</scope>
    <source>
        <strain>Berkeley</strain>
    </source>
</reference>
<reference key="3">
    <citation type="journal article" date="2002" name="Genome Biol.">
        <title>Annotation of the Drosophila melanogaster euchromatic genome: a systematic review.</title>
        <authorList>
            <person name="Misra S."/>
            <person name="Crosby M.A."/>
            <person name="Mungall C.J."/>
            <person name="Matthews B.B."/>
            <person name="Campbell K.S."/>
            <person name="Hradecky P."/>
            <person name="Huang Y."/>
            <person name="Kaminker J.S."/>
            <person name="Millburn G.H."/>
            <person name="Prochnik S.E."/>
            <person name="Smith C.D."/>
            <person name="Tupy J.L."/>
            <person name="Whitfield E.J."/>
            <person name="Bayraktaroglu L."/>
            <person name="Berman B.P."/>
            <person name="Bettencourt B.R."/>
            <person name="Celniker S.E."/>
            <person name="de Grey A.D.N.J."/>
            <person name="Drysdale R.A."/>
            <person name="Harris N.L."/>
            <person name="Richter J."/>
            <person name="Russo S."/>
            <person name="Schroeder A.J."/>
            <person name="Shu S.Q."/>
            <person name="Stapleton M."/>
            <person name="Yamada C."/>
            <person name="Ashburner M."/>
            <person name="Gelbart W.M."/>
            <person name="Rubin G.M."/>
            <person name="Lewis S.E."/>
        </authorList>
    </citation>
    <scope>GENOME REANNOTATION</scope>
    <source>
        <strain>Berkeley</strain>
    </source>
</reference>
<reference key="4">
    <citation type="submission" date="2005-06" db="EMBL/GenBank/DDBJ databases">
        <authorList>
            <person name="Stapleton M."/>
            <person name="Carlson J.W."/>
            <person name="Chavez C."/>
            <person name="Frise E."/>
            <person name="George R.A."/>
            <person name="Pacleb J.M."/>
            <person name="Park S."/>
            <person name="Wan K.H."/>
            <person name="Yu C."/>
            <person name="Celniker S.E."/>
        </authorList>
    </citation>
    <scope>NUCLEOTIDE SEQUENCE [LARGE SCALE MRNA]</scope>
    <scope>VARIANT MET-588</scope>
    <source>
        <strain>Berkeley</strain>
        <tissue>Embryo</tissue>
    </source>
</reference>
<reference key="5">
    <citation type="journal article" date="2004" name="Genetics">
        <title>Effects of population structure and sex on association between serotonin receptors and Drosophila heart rate.</title>
        <authorList>
            <person name="Nikoh N."/>
            <person name="Duty A."/>
            <person name="Gibson G."/>
        </authorList>
    </citation>
    <scope>NUCLEOTIDE SEQUENCE [GENOMIC DNA] OF 1-242</scope>
    <scope>NUCLEOTIDE SEQUENCE [GENOMIC DNA] OF 511-834</scope>
    <scope>VARIANTS 29-GLU--PRO-32 DEL; GLN-46; VAL-49; GLU-51; GLU-52; GLY-54; THR-76; THR-86; GLN-91; ALA-96; THR-143; THR-146; VAL-171; ASP-182; TYR-184; ASN-196; HIS-198; GLY-213; LEU-531; ALA-536; 547-ALA--GLY-550 DELINS GLY-PRO-MET-GLY-PRO-LEU; VAL-571; LYS-585; MET-588; ARG-589; VAL-648; PRO-657; TRP-682; ILE-688; THR-692; THR-706; HIS-716; GLN-HIS-716 INS; 716-GLN-GLN-717 DEL; 716-GLN--GLN-718 DEL AND 717-GLN--GLN-719 DELINS HIS</scope>
    <source>
        <strain>CA-001</strain>
        <strain>CA-002</strain>
        <strain>CA-003</strain>
        <strain>CA-008</strain>
        <strain>CA-009</strain>
        <strain>CA-010</strain>
        <strain>CA-011</strain>
        <strain>CA-012</strain>
        <strain>CA-013</strain>
        <strain>CA-015</strain>
        <strain>CA-017</strain>
        <strain>CA-018</strain>
        <strain>CA-023</strain>
        <strain>CA-026</strain>
        <strain>CA-027</strain>
        <strain>CA-030</strain>
        <strain>CA-031</strain>
        <strain>CA-033</strain>
        <strain>CA-034</strain>
        <strain>CA-035</strain>
        <strain>CA-037</strain>
        <strain>CA-040</strain>
        <strain>CA-041</strain>
        <strain>CA-043</strain>
        <strain>CA-044</strain>
        <strain>CA-045</strain>
        <strain>CA-046</strain>
        <strain>CA-047</strain>
        <strain>CA-048</strain>
        <strain>CA-052</strain>
        <strain>CA-055</strain>
        <strain>CA-056</strain>
        <strain>CA-057</strain>
        <strain>CA-058</strain>
        <strain>CA-060</strain>
        <strain>CA-061</strain>
        <strain>CA-062</strain>
        <strain>CA-063</strain>
        <strain>CA-064</strain>
        <strain>CA-065</strain>
        <strain>CA-066</strain>
        <strain>CA-068</strain>
        <strain>CA-069</strain>
        <strain>CA-070</strain>
        <strain>CA-072</strain>
        <strain>CA-073</strain>
        <strain>CA-075</strain>
        <strain>CA-081</strain>
        <strain>CA-083</strain>
        <strain>CA-086</strain>
        <strain>CA-087</strain>
        <strain>CA-088</strain>
        <strain>CA-089</strain>
        <strain>CA-090</strain>
        <strain>CA-091</strain>
        <strain>CA-093</strain>
        <strain>CA-095</strain>
        <strain>CA-096</strain>
        <strain>CA-100</strain>
        <strain>CA-105</strain>
        <strain>CA-113</strain>
        <strain>CA-114</strain>
        <strain>CA-115</strain>
        <strain>CA-118</strain>
        <strain>CA-120</strain>
        <strain>CA-123</strain>
        <strain>CA-126</strain>
        <strain>CA-127</strain>
        <strain>CA-128</strain>
        <strain>CA-129</strain>
        <strain>CA-130</strain>
        <strain>CA-132</strain>
        <strain>CA-133</strain>
        <strain>CA-136</strain>
        <strain>CA-137</strain>
        <strain>CA-140</strain>
        <strain>CA-142</strain>
        <strain>CA-144</strain>
        <strain>CA-145</strain>
        <strain>CA-147</strain>
        <strain>CA-148</strain>
        <strain>NC-001</strain>
        <strain>NC-002</strain>
        <strain>NC-003</strain>
        <strain>NC-004</strain>
        <strain>NC-005</strain>
        <strain>NC-006</strain>
        <strain>NC-008</strain>
        <strain>NC-010</strain>
        <strain>NC-011</strain>
        <strain>NC-012</strain>
        <strain>NC-013</strain>
        <strain>NC-014</strain>
        <strain>NC-015</strain>
        <strain>NC-017</strain>
        <strain>NC-021</strain>
        <strain>NC-022</strain>
        <strain>NC-023</strain>
        <strain>NC-024</strain>
        <strain>NC-025</strain>
        <strain>NC-026</strain>
        <strain>NC-027</strain>
        <strain>NC-028</strain>
        <strain>NC-029</strain>
        <strain>NC-030</strain>
        <strain>NC-032</strain>
        <strain>NC-033</strain>
        <strain>NC-034</strain>
        <strain>NC-036</strain>
        <strain>NC-037</strain>
        <strain>NC-038</strain>
        <strain>NC-039</strain>
        <strain>NC-040</strain>
        <strain>NC-041</strain>
        <strain>NC-042</strain>
        <strain>NC-043</strain>
        <strain>NC-044</strain>
        <strain>NC-046</strain>
        <strain>NC-047</strain>
        <strain>NC-048</strain>
        <strain>NC-049</strain>
        <strain>NC-050</strain>
        <strain>NC-051</strain>
        <strain>NC-052</strain>
        <strain>NC-053</strain>
        <strain>NC-054</strain>
        <strain>NC-057</strain>
        <strain>NC-058</strain>
        <strain>NC-059</strain>
        <strain>NC-060</strain>
        <strain>NC-061</strain>
        <strain>NC-064</strain>
        <strain>NC-066</strain>
        <strain>NC-067</strain>
        <strain>NC-068</strain>
        <strain>NC-069</strain>
        <strain>NC-070</strain>
        <strain>NC-071</strain>
        <strain>NC-072</strain>
        <strain>NC-073</strain>
        <strain>NC-074</strain>
        <strain>NC-075</strain>
        <strain>NC-077</strain>
        <strain>NC-079</strain>
        <strain>NC-080</strain>
        <strain>NC-081</strain>
        <strain>NC-084</strain>
        <strain>NC-086</strain>
        <strain>NC-087</strain>
        <strain>NC-088</strain>
        <strain>NC-089</strain>
        <strain>NC-091</strain>
        <strain>NC-092</strain>
        <strain>NC-094</strain>
        <strain>NC-095</strain>
        <strain>NC-096</strain>
        <strain>NC-097</strain>
        <strain>NC-098</strain>
        <strain>NC-100</strain>
        <strain>NC-101</strain>
        <strain>NC-103</strain>
        <strain>NC-104</strain>
        <strain>NC-105</strain>
        <strain>NC-107</strain>
        <strain>NC-108</strain>
        <strain>NC-109</strain>
        <strain>NC-110</strain>
        <strain>NC-111</strain>
        <strain>NC-112</strain>
        <strain>NC-113</strain>
        <strain>NC-114</strain>
        <strain>NC-115</strain>
        <strain>NC-116</strain>
        <strain>NC-118</strain>
        <strain>NC-119</strain>
        <strain>NC-121</strain>
        <strain>NC-123</strain>
        <strain>NC-124</strain>
        <strain>NC-125</strain>
        <strain>NC-126</strain>
        <strain>NC-127</strain>
        <strain>NC-128</strain>
        <strain>NC-129</strain>
        <strain>NC-131</strain>
        <strain>NC-133</strain>
        <strain>NC-134</strain>
        <strain>NC-135</strain>
        <strain>NC-136</strain>
        <strain>NC-137</strain>
        <strain>NC-138</strain>
        <strain>NC-139</strain>
        <strain>NC-141</strain>
        <strain>NC-142</strain>
        <strain>NC-144</strain>
        <strain>NC-146</strain>
        <strain>NC-147</strain>
        <strain>NC-148</strain>
        <strain>NC-149</strain>
        <strain>NC-150</strain>
    </source>
</reference>
<feature type="chain" id="PRO_0000068962" description="5-hydroxytryptamine receptor 2A">
    <location>
        <begin position="1"/>
        <end position="834"/>
    </location>
</feature>
<feature type="topological domain" description="Extracellular" evidence="1">
    <location>
        <begin position="1"/>
        <end position="230"/>
    </location>
</feature>
<feature type="transmembrane region" description="Helical; Name=1" evidence="1">
    <location>
        <begin position="231"/>
        <end position="253"/>
    </location>
</feature>
<feature type="topological domain" description="Cytoplasmic" evidence="1">
    <location>
        <begin position="254"/>
        <end position="263"/>
    </location>
</feature>
<feature type="transmembrane region" description="Helical; Name=2" evidence="1">
    <location>
        <begin position="264"/>
        <end position="285"/>
    </location>
</feature>
<feature type="topological domain" description="Extracellular" evidence="1">
    <location>
        <begin position="286"/>
        <end position="300"/>
    </location>
</feature>
<feature type="transmembrane region" description="Helical; Name=3" evidence="1">
    <location>
        <begin position="301"/>
        <end position="322"/>
    </location>
</feature>
<feature type="topological domain" description="Cytoplasmic" evidence="1">
    <location>
        <begin position="323"/>
        <end position="341"/>
    </location>
</feature>
<feature type="transmembrane region" description="Helical; Name=4" evidence="1">
    <location>
        <begin position="342"/>
        <end position="364"/>
    </location>
</feature>
<feature type="topological domain" description="Extracellular" evidence="1">
    <location>
        <begin position="365"/>
        <end position="391"/>
    </location>
</feature>
<feature type="transmembrane region" description="Helical; Name=5" evidence="1">
    <location>
        <begin position="392"/>
        <end position="413"/>
    </location>
</feature>
<feature type="topological domain" description="Cytoplasmic" evidence="1">
    <location>
        <begin position="414"/>
        <end position="752"/>
    </location>
</feature>
<feature type="transmembrane region" description="Helical; Name=6" evidence="1">
    <location>
        <begin position="753"/>
        <end position="776"/>
    </location>
</feature>
<feature type="topological domain" description="Extracellular" evidence="1">
    <location>
        <begin position="777"/>
        <end position="785"/>
    </location>
</feature>
<feature type="transmembrane region" description="Helical; Name=7" evidence="1">
    <location>
        <begin position="786"/>
        <end position="808"/>
    </location>
</feature>
<feature type="topological domain" description="Cytoplasmic" evidence="1">
    <location>
        <begin position="809"/>
        <end position="834"/>
    </location>
</feature>
<feature type="region of interest" description="Disordered" evidence="4">
    <location>
        <begin position="56"/>
        <end position="75"/>
    </location>
</feature>
<feature type="region of interest" description="Disordered" evidence="4">
    <location>
        <begin position="420"/>
        <end position="442"/>
    </location>
</feature>
<feature type="region of interest" description="Disordered" evidence="4">
    <location>
        <begin position="460"/>
        <end position="516"/>
    </location>
</feature>
<feature type="region of interest" description="Disordered" evidence="4">
    <location>
        <begin position="531"/>
        <end position="599"/>
    </location>
</feature>
<feature type="region of interest" description="Disordered" evidence="4">
    <location>
        <begin position="617"/>
        <end position="640"/>
    </location>
</feature>
<feature type="region of interest" description="Disordered" evidence="4">
    <location>
        <begin position="674"/>
        <end position="743"/>
    </location>
</feature>
<feature type="compositionally biased region" description="Polar residues" evidence="4">
    <location>
        <begin position="482"/>
        <end position="502"/>
    </location>
</feature>
<feature type="compositionally biased region" description="Polar residues" evidence="4">
    <location>
        <begin position="532"/>
        <end position="542"/>
    </location>
</feature>
<feature type="compositionally biased region" description="Basic and acidic residues" evidence="4">
    <location>
        <begin position="551"/>
        <end position="564"/>
    </location>
</feature>
<feature type="compositionally biased region" description="Acidic residues" evidence="4">
    <location>
        <begin position="565"/>
        <end position="575"/>
    </location>
</feature>
<feature type="compositionally biased region" description="Low complexity" evidence="4">
    <location>
        <begin position="582"/>
        <end position="593"/>
    </location>
</feature>
<feature type="compositionally biased region" description="Polar residues" evidence="4">
    <location>
        <begin position="674"/>
        <end position="694"/>
    </location>
</feature>
<feature type="compositionally biased region" description="Low complexity" evidence="4">
    <location>
        <begin position="702"/>
        <end position="723"/>
    </location>
</feature>
<feature type="glycosylation site" description="N-linked (GlcNAc...) asparagine" evidence="2">
    <location>
        <position position="68"/>
    </location>
</feature>
<feature type="glycosylation site" description="N-linked (GlcNAc...) asparagine" evidence="2">
    <location>
        <position position="97"/>
    </location>
</feature>
<feature type="glycosylation site" description="N-linked (GlcNAc...) asparagine" evidence="2">
    <location>
        <position position="161"/>
    </location>
</feature>
<feature type="glycosylation site" description="N-linked (GlcNAc...) asparagine" evidence="2">
    <location>
        <position position="175"/>
    </location>
</feature>
<feature type="glycosylation site" description="N-linked (GlcNAc...) asparagine" evidence="2">
    <location>
        <position position="183"/>
    </location>
</feature>
<feature type="glycosylation site" description="N-linked (GlcNAc...) asparagine" evidence="2">
    <location>
        <position position="194"/>
    </location>
</feature>
<feature type="glycosylation site" description="N-linked (GlcNAc...) asparagine" evidence="2">
    <location>
        <position position="203"/>
    </location>
</feature>
<feature type="glycosylation site" description="N-linked (GlcNAc...) asparagine" evidence="2">
    <location>
        <position position="209"/>
    </location>
</feature>
<feature type="disulfide bond" evidence="3">
    <location>
        <begin position="299"/>
        <end position="378"/>
    </location>
</feature>
<feature type="sequence variant" description="In strain: CA-128." evidence="7">
    <location>
        <begin position="29"/>
        <end position="32"/>
    </location>
</feature>
<feature type="sequence variant" description="In strain: NC-066." evidence="7">
    <original>E</original>
    <variation>Q</variation>
    <location>
        <position position="46"/>
    </location>
</feature>
<feature type="sequence variant" description="In strain: NC-036 and NC-123." evidence="7">
    <original>E</original>
    <variation>V</variation>
    <location>
        <position position="49"/>
    </location>
</feature>
<feature type="sequence variant" description="In strain: CA-002, CA-008, CA-009, CA-011, CA-013, CA-015, CA-026, CA-031, CA-033, CA-034, CA-035, CA-037, CA-040, CA-048, CA-052, CA-055, CA-057, CA-060, CA-061, CA-063, CA-064, CA-065, CA-069, CA-072, CA-073, CA-075, CA-088, CA-090, CA-093, CA-096, CA-100, CA-114, CA-120, CA-127, CA-129, CA-132, CA-133, CA-140, CA-142, CA-145, CA-147, NC-003, NC-006, NC-010, NC-011, NC-014, NC-015, NC-021, NC-033, NC-034, NC-036, NC-040, NC-042, NC-044, NC-046, NC-047, NC-051, NC-052, NC-054, NC-057, NC-066, NC-069, NC-071, NC-073, NC-081, NC-084, NC-086, NC-089, NC-092, NC-094, NC-096, NC-097, NC-101, NC-103, NC-104, NC-107, NC-108, NC-118, NC-119, NC-121, NC-123, NC-127, NC-128, NC-129, NC-134, NC-136, NC-137, NC-138, NC-141, NC-144 and NC-148." evidence="7">
    <original>D</original>
    <variation>E</variation>
    <location>
        <position position="51"/>
    </location>
</feature>
<feature type="sequence variant" description="In strain: NC-103 and NC-118." evidence="7">
    <original>D</original>
    <variation>E</variation>
    <location>
        <position position="52"/>
    </location>
</feature>
<feature type="sequence variant" description="In strain: NC-061." evidence="7">
    <original>A</original>
    <variation>G</variation>
    <location>
        <position position="54"/>
    </location>
</feature>
<feature type="sequence variant" description="In strain: NC-012, NC-023, NC-037, NC-038, NC-039, NC-124 and NC-131." evidence="7">
    <original>S</original>
    <variation>T</variation>
    <location>
        <position position="76"/>
    </location>
</feature>
<feature type="sequence variant" description="In strain: CA-008, CA-009, CA-013, CA-026, CA-031, CA-033, CA-035, CA-037, CA-040, CA-048, CA-052, CA-057, CA-060, CA-061, CA-063, CA-065, CA-072, CA-073, CA-088, CA-093, CA-096, CA-100, CA-114, CA-120, CA-129, CA-132, CA-133, CA-140, CA-147, NC-011, NC-015, NC-021, NC-033, NC-034, NC-040, NC-042, NC-044, NC-046, NC-047, NC-051, NC-052, NC-054, NC-057, NC-069, NC-084, NC-089, NC-092, NC-094, NC-097, NC-103, NC-107, NC-119, NC-121, NC-127, NC-128, NC-129, NC-134, NC-137, NC-138, NC-141, NC-144 and NC-148." evidence="7">
    <original>S</original>
    <variation>T</variation>
    <location>
        <position position="86"/>
    </location>
</feature>
<feature type="sequence variant" description="In strain: CA-030, CA-068, CA-091, NC-008, NC-025, NC-043, NC-048, NC-060, NC-075, NC-088, NC-091, NC-114, NC-116 and NC-135." evidence="7">
    <original>P</original>
    <variation>Q</variation>
    <location>
        <position position="91"/>
    </location>
</feature>
<feature type="sequence variant" description="In strain: CA-008, CA-009, CA-011, CA-013, CA-015, CA-026, CA-031, CA-033, CA-034, CA-035, CA-037, CA-040, CA-048, CA-052, CA-055, CA-057, CA-060, CA-061, CA-063, CA-064, CA-065, CA-069, CA-072, CA-073, CA-075, CA-088, CA-090, CA-093, CA-095, CA-096, CA-100, CA-114, CA-120, CA-129, CA-132, CA-133, CA-140, CA-147, NC-010, NC-011, NC-012, NC-014, NC-015, NC-021, NC-023, NC-033, NC-034, NC-036, NC-037, NC-038, NC-039, NC-040, NC-042, NC-044, NC-046, NC-047, NC-051, NC-052, NC-054, NC-057, NC-066, NC-069, NC-073, NC-081, NC-084, NC-086, NC-089, NC-092, NC-094, NC-096, NC-097, NC-101, NC-103, NC-104, NC-107, NC-108, NC-118, NC-119, NC-121, NC-123, NC-124, NC-127, NC-128, NC-129, NC-131, NC-134, NC-136, NC-137, NC-138, NC-141, NC-144, NC-148 and Oregon-R." evidence="6 7">
    <original>V</original>
    <variation>A</variation>
    <location>
        <position position="96"/>
    </location>
</feature>
<feature type="sequence variant" description="In strain: CA-064." evidence="7">
    <original>A</original>
    <variation>T</variation>
    <location>
        <position position="143"/>
    </location>
</feature>
<feature type="sequence variant" description="In strain: CA-008, CA-026, CA-033, CA-035, CA-037, CA-048, CA-052, CA-057, CA-060, CA-063, CA-065, CA-072, CA-088, CA-090, CA-096, CA-100, CA-114, CA-120, CA-132, CA-140, CA-147, NC-011, NC-014, NC-033, NC-034, NC-040, NC-042, NC-044, NC-046, NC-047, NC-051, NC-052, NC-054, NC-057, NC-069, NC-084, NC-092, NC-094, NC-096, NC-103, NC-105, NC-107, NC-108, NC-118, NC-119, NC-121, NC-125, NC-126, NC-127, NC-129, NC-138, NC-144 and NC-148." evidence="7">
    <original>S</original>
    <variation>T</variation>
    <location>
        <position position="146"/>
    </location>
</feature>
<feature type="sequence variant" description="In strain: CA-008, CA-009, CA-026, CA-031, CA-033, CA-035, CA-037, CA-048, CA-052, CA-057, CA-060, CA-061, CA-063, CA-065, CA-072, CA-088, CA-096, CA-100, CA-114, CA-120, CA-132, CA-140, CA-147, NC-011, NC-034, NC-040, NC-042, NC-044, NC-046, NC-047, NC-051, NC-052, NC-054, NC-057, NC-069, NC-084, NC-092, NC-094, NC-103, NC-107, NC-119, NC-121, NC-127, NC-129, NC-138, NC-144 and NC-148." evidence="7">
    <original>A</original>
    <variation>V</variation>
    <location>
        <position position="171"/>
    </location>
</feature>
<feature type="sequence variant" description="In strain: NC-066." evidence="7">
    <original>G</original>
    <variation>D</variation>
    <location>
        <position position="182"/>
    </location>
</feature>
<feature type="sequence variant" description="In strain: NC-086, NC-104 and NC-010." evidence="7">
    <original>D</original>
    <variation>Y</variation>
    <location>
        <position position="184"/>
    </location>
</feature>
<feature type="sequence variant" description="In strain: NC-114." evidence="6 7">
    <original>S</original>
    <variation>N</variation>
    <location>
        <position position="196"/>
    </location>
</feature>
<feature type="sequence variant" description="In strain: CA-001, CA-009, CA-011, CA-013, CA-015, CA-026, CA-030, CA-031, CA-033, CA-034, CA-035, CA-037, CA-040, CA-046, CA-048, CA-052, CA-055, CA-057, CA-060, CA-061, CA-063, CA-065, CA-066, CA-068, CA-069, CA-072, CA-073, CA-075, CA-088, CA-090, CA-091, CA-093, CA-095, CA-096, CA-100, CA-114, CA-120, CA-132, CA-133, CA-140, CA-147, NC-008, NC-011, NC-014, NC-015, NC-025, NC-034, NC-040, NC-042, NC-043, NC-044, NC-046, NC-047, NC-048, NC-051, NC-052, NC-054, NC-057, NC-060, NC-066, NC-069, NC-073, NC-075, NC-081, NC-084, NC-088, NC-091, NC-092, NC-094, NC-096, NC-101, NC-103, NC-107, NC-108, NC-110, NC-113, NC-114, NC-115, NC-116, NC-118, NC-119, NC-121, NC-123, NC-127, NC-128, NC-129, NC-135, NC-136, NC-137, NC-138, NC-139, NC-142, NC-144, NC-146, NC-148 and Oregon-R." evidence="7">
    <original>Q</original>
    <variation>H</variation>
    <location>
        <position position="198"/>
    </location>
</feature>
<feature type="sequence variant" description="In strain: CA-015." evidence="7">
    <original>S</original>
    <variation>G</variation>
    <location>
        <position position="213"/>
    </location>
</feature>
<feature type="sequence variant" description="In strain: NC-104." evidence="7">
    <original>Q</original>
    <variation>L</variation>
    <location>
        <position position="531"/>
    </location>
</feature>
<feature type="sequence variant" description="In strain: CA-011, CA-017, CA-018, CA-062, CA-130, NC-118, NC-022, NC-026, NC-049 and NC-073." evidence="7">
    <original>T</original>
    <variation>A</variation>
    <location>
        <position position="536"/>
    </location>
</feature>
<feature type="sequence variant" description="In strain: CA-013, CA-026 and CA-093." evidence="7">
    <original>APSG</original>
    <variation>GPMGPL</variation>
    <location>
        <begin position="547"/>
        <end position="550"/>
    </location>
</feature>
<feature type="sequence variant" description="In strain: CA-002, CA-003, CA-008, CA-011, CA-012, CA-015, CA-023, CA-027, CA-030, CA-031, CA-034, CA-035, CA-037, CA-043, CA-044, CA-045, CA-046, CA-048, CA-052, CA-055, CA-057, CA-058, CA-063, CA-064, CA-065, CA-066, CA-068, CA-070, CA-072, CA-073, CA-075, CA-081, CA-083, CA-087, CA-088, CA-089, CA-091, CA-096, CA-100, CA-105, CA-114, CA-120, CA-123, CA-128, CA-129, CA-133, CA-140, CA-145, CA-147, CA-148, NC-001, NC-002, NC-003, NC-010, NC-011, NC-012, NC-013, NC-015, NC-023, NC-024, NC-025, NC-027, NC-028, NC-029, NC-030, NC-032, NC-033, NC-034, NC-036, NC-040, NC-041, NC-042, NC-043, NC-044, NC-046, NC-047, NC-048, NC-050, NC-051, NC-052, NC-054, NC-057, NC-059, NC-060, NC-061, NC-066, NC-069, NC-071, NC-072, NC-074, NC-075, NC-077, NC-079, NC-080, NC-081, NC-084, NC-086, NC-087, NC-088, NC-089, NC-091, NC-092, NC-094, NC-098, NC-101, NC-103, NC-104, NC-107, NC-109, NC-110, NC-111, NC-112, NC-113, NC-114, NC-115, NC-116, NC-119, NC-121, NC-124, NC-127, NC-128, NC-129, NC-131, NC-133, NC-134, NC-135, NC-136, NC-137, NC-138, NC-144, NC-146, NC-147, NC-148 and NC-149." evidence="7">
    <original>E</original>
    <variation>V</variation>
    <location>
        <position position="571"/>
    </location>
</feature>
<feature type="sequence variant" description="In strain: NC-026." evidence="7">
    <original>T</original>
    <variation>K</variation>
    <location>
        <position position="585"/>
    </location>
</feature>
<feature type="sequence variant" description="In strain: Berkeley, CA-009, CA-010, CA-013, CA-026, CA-041, CA-060, CA-063, CA-066, CA-086, CA-093, CA-113, CA-137, CA-145, NC-006, NC-008, NC-021, NC-064, NC-067, NC-123, NC-142 and NC-150." evidence="5 7 8">
    <original>T</original>
    <variation>M</variation>
    <location>
        <position position="588"/>
    </location>
</feature>
<feature type="sequence variant" description="In strain: CA-040, CA-056, CA-115, CA-118, CA-126, CA-132, CA-142, NC-005, NC-037, NC-038, NC-039, NC-053, NC-068, NC-095, NC-100, NC-105, NC-125, NC-126 and NC-139." evidence="7">
    <original>T</original>
    <variation>R</variation>
    <location>
        <position position="589"/>
    </location>
</feature>
<feature type="sequence variant" description="In strain: CA-023, CA-048, NC-015, NC-110, NC-128, NC-133 and NC-137." evidence="7">
    <original>A</original>
    <variation>V</variation>
    <location>
        <position position="648"/>
    </location>
</feature>
<feature type="sequence variant" description="In strain: CA-130." evidence="7">
    <original>Q</original>
    <variation>P</variation>
    <location>
        <position position="657"/>
    </location>
</feature>
<feature type="sequence variant" description="In strain: CA-043, CA-058 and CA-105." evidence="7">
    <original>S</original>
    <variation>W</variation>
    <location>
        <position position="682"/>
    </location>
</feature>
<feature type="sequence variant" description="In strain: CA-088." evidence="7">
    <original>T</original>
    <variation>I</variation>
    <location>
        <position position="688"/>
    </location>
</feature>
<feature type="sequence variant" description="In strain: NC-104." evidence="7">
    <original>S</original>
    <variation>T</variation>
    <location>
        <position position="692"/>
    </location>
</feature>
<feature type="sequence variant" description="In strain: NC-001." evidence="7">
    <original>P</original>
    <variation>T</variation>
    <location>
        <position position="706"/>
    </location>
</feature>
<feature type="sequence variant" description="In strain: NC-118." evidence="7">
    <location>
        <begin position="716"/>
        <end position="718"/>
    </location>
</feature>
<feature type="sequence variant" description="In strain: CA-002, CA-009, CA-010, CA-011, CA-017, CA-018, CA-023, CA-030, CA-031, CA-037, CA-040, CA-041, CA-044, CA-045, CA-047, CA-048, CA-052, CA-056, CA-057, CA-062, CA-068, CA-070, CA-075, CA-086, CA-087, CA-088, CA-089, CA-091, CA-095, CA-096, CA-100, CA-113, CA-114, CA-115, CA-118, CA-120, CA-126, CA-127, CA-129, CA-132, CA-133, CA-136, CA-140, CA-142, CA-145, CA-147, NC-001, NC-003, NC-004, NC-005, NC-011, NC-015, NC-017, NC-021, NC-022, NC-025, NC-033, NC-034, NC-036, NC-037, NC-038, NC-039, NC-040, NC-042, NC-044, NC-046, NC-048, NC-049, NC-051, NC-052, NC-053, NC-054, NC-057, NC-059, NC-068, NC-069, NC-070, NC-071, NC-079, NC-080, NC-084, NC-086, NC-087, NC-088, NC-089, NC-091, NC-092, NC-094, NC-095, NC-100, NC-101, NC-104, NC-105, NC-107, NC-109, NC-110, NC-111, NC-112, NC-113, NC-114, NC-115, NC-116, NC-119, NC-121, NC-123, NC-125, NC-126, NC-128, NC-129, NC-133, NC-134, NC-135, NC-136, NC-137, NC-138, NC-139, NC-142, NC-144, NC-146, NC-147, NC-148, NC-149 and NC-150." evidence="7">
    <location>
        <begin position="716"/>
        <end position="717"/>
    </location>
</feature>
<feature type="sequence variant" description="In strain: NC-032." evidence="7">
    <original>Q</original>
    <variation>H</variation>
    <location>
        <position position="716"/>
    </location>
</feature>
<feature type="sequence variant" description="In strain: NC-047.">
    <original>Q</original>
    <variation>QH</variation>
    <location>
        <position position="716"/>
    </location>
</feature>
<feature type="sequence variant" description="In strain: CA-069, NC-096 and NC-108." evidence="7">
    <original>QQQ</original>
    <variation>H</variation>
    <location>
        <begin position="717"/>
        <end position="719"/>
    </location>
</feature>
<feature type="sequence conflict" description="In Ref. 1; CAA77570." evidence="9" ref="1">
    <original>R</original>
    <variation>W</variation>
    <location>
        <position position="135"/>
    </location>
</feature>
<feature type="sequence conflict" description="In Ref. 1; CAA77570." evidence="9" ref="1">
    <original>L</original>
    <variation>M</variation>
    <location>
        <position position="400"/>
    </location>
</feature>
<feature type="sequence conflict" description="In Ref. 4; AAY84887." evidence="9" ref="4">
    <original>R</original>
    <variation>Q</variation>
    <location>
        <position position="813"/>
    </location>
</feature>
<accession>P28285</accession>
<accession>Q0E921</accession>
<accession>Q4QQC9</accession>
<accession>Q5MTE9</accession>
<accession>Q5MTF1</accession>
<accession>Q5MTF2</accession>
<accession>Q5MTF3</accession>
<accession>Q5MTF8</accession>
<accession>Q5MTF9</accession>
<accession>Q5MTG0</accession>
<accession>Q5MTG1</accession>
<accession>Q5MTG2</accession>
<accession>Q5MTG3</accession>
<accession>Q5MTG4</accession>
<accession>Q5MTG6</accession>
<accession>Q5MTG9</accession>
<accession>Q5MTH1</accession>
<accession>Q5MTH2</accession>
<accession>Q5MTH5</accession>
<accession>Q5MTH6</accession>
<accession>Q5MTH7</accession>
<accession>Q5MTH9</accession>
<accession>Q5MTI0</accession>
<accession>Q5MTI1</accession>
<accession>Q5MTI4</accession>
<accession>Q5MTI6</accession>
<accession>Q5MTI7</accession>
<accession>Q5MTI8</accession>
<accession>Q5MTJ0</accession>
<accession>Q5MTJ4</accession>
<accession>Q5MTJ5</accession>
<accession>Q5MTJ6</accession>
<accession>Q5MTJ9</accession>
<accession>Q5MTK5</accession>
<accession>Q5MTL1</accession>
<accession>Q5MTL5</accession>
<accession>Q5MTL6</accession>
<accession>Q5MTM2</accession>
<accession>Q5MTM5</accession>
<accession>Q5MTM8</accession>
<accession>Q5MTN6</accession>
<accession>Q5MTQ1</accession>
<accession>Q5MTQ4</accession>
<accession>Q5MTR1</accession>
<accession>Q5MTR3</accession>
<accession>Q5MTR6</accession>
<accession>Q5MTR8</accession>
<accession>Q5MTS1</accession>
<accession>Q5MTT8</accession>
<accession>Q5MTV6</accession>
<accession>Q5MTV7</accession>
<accession>Q5MTV9</accession>
<accession>Q5MTW8</accession>
<accession>Q5MTX2</accession>
<accession>Q5MTX7</accession>
<accession>Q5MTY3</accession>
<accession>Q5MTY7</accession>
<accession>Q5MTY8</accession>
<accession>Q5MTY9</accession>
<accession>Q5MTZ0</accession>
<accession>Q5MTZ6</accession>
<accession>Q5MUJ0</accession>
<accession>Q5MUK2</accession>
<accession>Q5MUK5</accession>
<accession>Q5MUK8</accession>
<accession>Q5MUL0</accession>
<accession>Q5MUL2</accession>
<accession>Q5MUL5</accession>
<accession>Q5MUM3</accession>
<accession>Q5MUM7</accession>
<accession>Q5MUM9</accession>
<accession>Q5MUN0</accession>
<accession>Q5MUN1</accession>
<accession>Q5MUN2</accession>
<accession>Q5MUP0</accession>
<accession>Q5MUP5</accession>
<accession>Q5MUP6</accession>
<accession>Q5MUP7</accession>
<accession>Q5MUP8</accession>
<accession>Q5MUQ1</accession>
<accession>Q5MUQ6</accession>
<accession>Q5MUQ7</accession>
<accession>Q5MUQ8</accession>
<accession>Q5MUQ9</accession>
<accession>Q5MUR1</accession>
<accession>Q5MUR2</accession>
<accession>Q5MUR3</accession>
<accession>Q5MUR4</accession>
<accession>Q5MUR5</accession>
<accession>Q5MUT3</accession>
<accession>Q5MUT4</accession>
<accession>Q5MUT7</accession>
<accession>Q5MUT9</accession>
<accession>Q5MUU2</accession>
<accession>Q5MUU5</accession>
<accession>Q5MUU6</accession>
<accession>Q5MUV4</accession>
<accession>Q5MUV5</accession>
<accession>Q5MUV8</accession>
<accession>Q5MUV9</accession>
<accession>Q5MUW3</accession>
<accession>Q5MUW4</accession>
<accession>Q5MUW7</accession>
<accession>Q5MUX4</accession>
<accession>Q5MUX6</accession>
<accession>Q5MUY1</accession>
<accession>Q5MUY3</accession>
<accession>Q5MV05</accession>
<accession>Q5MV06</accession>
<accession>Q5MV07</accession>
<accession>Q5MV08</accession>
<accession>Q5MV13</accession>
<accession>Q5MV14</accession>
<accession>Q5MV15</accession>
<accession>Q5MV26</accession>
<accession>Q5MV30</accession>
<accession>Q9V8Q9</accession>
<evidence type="ECO:0000250" key="1"/>
<evidence type="ECO:0000255" key="2"/>
<evidence type="ECO:0000255" key="3">
    <source>
        <dbReference type="PROSITE-ProRule" id="PRU00521"/>
    </source>
</evidence>
<evidence type="ECO:0000256" key="4">
    <source>
        <dbReference type="SAM" id="MobiDB-lite"/>
    </source>
</evidence>
<evidence type="ECO:0000269" key="5">
    <source>
    </source>
</evidence>
<evidence type="ECO:0000269" key="6">
    <source>
    </source>
</evidence>
<evidence type="ECO:0000269" key="7">
    <source>
    </source>
</evidence>
<evidence type="ECO:0000269" key="8">
    <source ref="4"/>
</evidence>
<evidence type="ECO:0000305" key="9"/>
<sequence length="834" mass="89521">MAHETSFNDALDYIYIANSMNDRAFLIAEPHPEQPNVDGQDQDDAELEELDDMAVTDDGQLEDTNNNNNSKRYYSSGKRRADFIGSLALKPPPTDVNTTTTTAGSPLATAALAAAAASASVAAAAARITAKAAHRALTTKQDATSSPASSPALQLIDMDNNYTNVAVGLGAMLLNDTLLLEGNDSSLFGEMLANRSGQLDLINGTGGLNVTTSKVAEDDFTQLLRMAVTSVLLGLMILVTIIGNVFVIAAIILERNLQNVANYLVASLAVADLFVACLVMPLGAVYEISQGWILGPELCDIWTSCDVLCCTASILHLVAIAVDRYWAVTNIDYIHSRTSNRVFMMIFCVWTAAVIVSLAPQFGWKDPDYLQRIEQQKCMVSQDVSYQVFATCCTFYVPLLVILALYWKIYQTARKRIHRRRPRPVDAAVNNNQPDGGAATDTKLHRLRLRLGRFSTAKSKTGSAVGVSGPASGGRALGLVDGNSTNTVNTVEDTEFSSSNVDSKSRAGVEAPSTSGNQIATVSHLVALAKQQGKSTAKSSAAVNGMAPSGRQEDDGQRPEHGEQEDREELEDQDEQVGPQPTTATSATTAAGTNESEDQCKANGVEVLEDPQLQQQLEQVQQLQKSVKSGGGGGASTSNATTITSISALSPQTPTSQGVGIAAAAAGPMTAKTSTLTSCNQSHPLCGTANESPSTPEPRSRQPTTPQQQPHQQAHQQQQQQQQLSSIANPMQKVNKRKETLEAKRERKAAKTLAIITGAFVVCWLPFFVMALTMPLCAACQISDSVASLFLWLGYFNSTLNPVIYTIFSPEFRQAFKRILFGGHRPVHYRSGKL</sequence>